<evidence type="ECO:0000250" key="1">
    <source>
        <dbReference type="UniProtKB" id="P00410"/>
    </source>
</evidence>
<evidence type="ECO:0000250" key="2">
    <source>
        <dbReference type="UniProtKB" id="P68530"/>
    </source>
</evidence>
<evidence type="ECO:0000269" key="3">
    <source>
    </source>
</evidence>
<evidence type="ECO:0000269" key="4">
    <source>
    </source>
</evidence>
<evidence type="ECO:0000269" key="5">
    <source>
    </source>
</evidence>
<evidence type="ECO:0000269" key="6">
    <source>
    </source>
</evidence>
<evidence type="ECO:0000269" key="7">
    <source>
    </source>
</evidence>
<evidence type="ECO:0000269" key="8">
    <source>
    </source>
</evidence>
<evidence type="ECO:0000269" key="9">
    <source>
    </source>
</evidence>
<evidence type="ECO:0000269" key="10">
    <source>
    </source>
</evidence>
<evidence type="ECO:0000269" key="11">
    <source>
    </source>
</evidence>
<evidence type="ECO:0000269" key="12">
    <source>
    </source>
</evidence>
<evidence type="ECO:0000269" key="13">
    <source>
    </source>
</evidence>
<evidence type="ECO:0000269" key="14">
    <source>
    </source>
</evidence>
<evidence type="ECO:0000303" key="15">
    <source>
    </source>
</evidence>
<evidence type="ECO:0000305" key="16"/>
<reference key="1">
    <citation type="journal article" date="1981" name="Nature">
        <title>Sequence and organization of the human mitochondrial genome.</title>
        <authorList>
            <person name="Anderson S."/>
            <person name="Bankier A.T."/>
            <person name="Barrell B.G."/>
            <person name="de Bruijn M.H.L."/>
            <person name="Coulson A.R."/>
            <person name="Drouin J."/>
            <person name="Eperon I.C."/>
            <person name="Nierlich D.P."/>
            <person name="Roe B.A."/>
            <person name="Sanger F."/>
            <person name="Schreier P.H."/>
            <person name="Smith A.J.H."/>
            <person name="Staden R."/>
            <person name="Young I.G."/>
        </authorList>
    </citation>
    <scope>NUCLEOTIDE SEQUENCE [LARGE SCALE GENOMIC DNA]</scope>
</reference>
<reference key="2">
    <citation type="journal article" date="1989" name="Nucleic Acids Res.">
        <title>Nucleotide sequence of human mitochondrial cytochrome c oxidase II cDNA.</title>
        <authorList>
            <person name="Power M.D."/>
            <person name="Kiefer M.C."/>
            <person name="Barr P.J."/>
            <person name="Reeves R."/>
        </authorList>
    </citation>
    <scope>NUCLEOTIDE SEQUENCE [MRNA]</scope>
</reference>
<reference key="3">
    <citation type="journal article" date="1979" name="Nature">
        <title>A different genetic code in human mitochondria.</title>
        <authorList>
            <person name="Barrell B.G."/>
            <person name="Bankier A.T."/>
            <person name="Drouin J."/>
        </authorList>
    </citation>
    <scope>NUCLEOTIDE SEQUENCE [GENOMIC DNA]</scope>
</reference>
<reference key="4">
    <citation type="journal article" date="1995" name="Proc. Natl. Acad. Sci. U.S.A.">
        <title>Recent African origin of modern humans revealed by complete sequences of hominoid mitochondrial DNAs.</title>
        <authorList>
            <person name="Horai S."/>
            <person name="Hayasaka K."/>
            <person name="Kondo R."/>
            <person name="Tsugane K."/>
            <person name="Takahata N."/>
        </authorList>
    </citation>
    <scope>NUCLEOTIDE SEQUENCE [GENOMIC DNA]</scope>
    <source>
        <tissue>Placenta</tissue>
    </source>
</reference>
<reference key="5">
    <citation type="journal article" date="1993" name="Mol. Biol. Evol.">
        <title>Mitochondrial COII sequences and modern human origins.</title>
        <authorList>
            <person name="Ruvolo M."/>
            <person name="Zehr S."/>
            <person name="von Dornum M."/>
            <person name="Pan D."/>
            <person name="Chang B."/>
            <person name="Lin J."/>
        </authorList>
    </citation>
    <scope>NUCLEOTIDE SEQUENCE [GENOMIC DNA]</scope>
    <scope>VARIANTS VAL-30 AND THR-148</scope>
</reference>
<reference key="6">
    <citation type="journal article" date="2003" name="Mol. Biol. Evol.">
        <title>Lineage-specific selection in human mtDNA: lack of polymorphisms in a segment of MTND5 gene in haplogroup J.</title>
        <authorList>
            <person name="Moilanen J.S."/>
            <person name="Finnila S."/>
            <person name="Majamaa K."/>
        </authorList>
    </citation>
    <scope>NUCLEOTIDE SEQUENCE [GENOMIC DNA]</scope>
</reference>
<reference key="7">
    <citation type="journal article" date="2000" name="Nature">
        <title>Mitochondrial genome variation and the origin of modern humans.</title>
        <authorList>
            <person name="Ingman M."/>
            <person name="Kaessmann H."/>
            <person name="Paeaebo S."/>
            <person name="Gyllensten U."/>
        </authorList>
    </citation>
    <scope>NUCLEOTIDE SEQUENCE [GENOMIC DNA]</scope>
</reference>
<reference key="8">
    <citation type="journal article" date="2003" name="Genome Res.">
        <title>Mitochondrial genome variation and evolutionary history of Australian and New Guinean aborigines.</title>
        <authorList>
            <person name="Ingman M."/>
            <person name="Gyllensten U."/>
        </authorList>
    </citation>
    <scope>NUCLEOTIDE SEQUENCE [GENOMIC DNA]</scope>
</reference>
<reference key="9">
    <citation type="journal article" date="2004" name="Int. J. Legal Med.">
        <title>Single nucleotide polymorphisms over the entire mtDNA genome that increase the power of forensic testing in Caucasians.</title>
        <authorList>
            <person name="Coble M.D."/>
            <person name="Just R.S."/>
            <person name="O'Callaghan J.E."/>
            <person name="Letmanyi I.H."/>
            <person name="Peterson C.T."/>
            <person name="Irwin J.A."/>
            <person name="Parsons T.J."/>
        </authorList>
    </citation>
    <scope>NUCLEOTIDE SEQUENCE [GENOMIC DNA]</scope>
</reference>
<reference key="10">
    <citation type="submission" date="1997-05" db="EMBL/GenBank/DDBJ databases">
        <title>Gonococcal microcolony formation on HEC-1-B cells alters selective mitochondrial transcripts.</title>
        <authorList>
            <person name="Swanson K.V."/>
            <person name="Griffiss J."/>
        </authorList>
    </citation>
    <scope>NUCLEOTIDE SEQUENCE [GENOMIC DNA] OF 39-227</scope>
    <source>
        <tissue>Endometrial adenocarcinoma</tissue>
    </source>
</reference>
<reference key="11">
    <citation type="submission" date="1990-09" db="EMBL/GenBank/DDBJ databases">
        <title>Nucleotide sequence of mitochondrial cytochrome C oxidase II from human fetal liver.</title>
        <authorList>
            <person name="Dmitrenko V.V."/>
            <person name="Kavsan V.M."/>
        </authorList>
    </citation>
    <scope>NUCLEOTIDE SEQUENCE [MRNA] OF 42-227</scope>
    <source>
        <tissue>Fetal liver</tissue>
    </source>
</reference>
<reference key="12">
    <citation type="journal article" date="2011" name="BMC Syst. Biol.">
        <title>Initial characterization of the human central proteome.</title>
        <authorList>
            <person name="Burkard T.R."/>
            <person name="Planyavsky M."/>
            <person name="Kaupe I."/>
            <person name="Breitwieser F.P."/>
            <person name="Buerckstuemmer T."/>
            <person name="Bennett K.L."/>
            <person name="Superti-Furga G."/>
            <person name="Colinge J."/>
        </authorList>
    </citation>
    <scope>IDENTIFICATION BY MASS SPECTROMETRY [LARGE SCALE ANALYSIS]</scope>
</reference>
<reference key="13">
    <citation type="journal article" date="2013" name="Hum. Mol. Genet.">
        <title>A mutation in the FAM36A gene, the human ortholog of COX20, impairs cytochrome c oxidase assembly and is associated with ataxia and muscle hypotonia.</title>
        <authorList>
            <person name="Szklarczyk R."/>
            <person name="Wanschers B.F."/>
            <person name="Nijtmans L.G."/>
            <person name="Rodenburg R.J."/>
            <person name="Zschocke J."/>
            <person name="Dikow N."/>
            <person name="van den Brand M.A."/>
            <person name="Hendriks-Franssen M.G."/>
            <person name="Gilissen C."/>
            <person name="Veltman J.A."/>
            <person name="Nooteboom M."/>
            <person name="Koopman W.J."/>
            <person name="Willems P.H."/>
            <person name="Smeitink J.A."/>
            <person name="Huynen M.A."/>
            <person name="van den Heuvel L.P."/>
        </authorList>
    </citation>
    <scope>INTERACTION WITH COX20</scope>
</reference>
<reference key="14">
    <citation type="journal article" date="2014" name="Hum. Mol. Genet.">
        <title>Human COX20 cooperates with SCO1 and SCO2 to mature COX2 and promote the assembly of cytochrome c oxidase.</title>
        <authorList>
            <person name="Bourens M."/>
            <person name="Boulet A."/>
            <person name="Leary S.C."/>
            <person name="Barrientos A."/>
        </authorList>
    </citation>
    <scope>INTERACTION WITH COX20</scope>
</reference>
<reference key="15">
    <citation type="journal article" date="2014" name="J. Proteomics">
        <title>An enzyme assisted RP-RPLC approach for in-depth analysis of human liver phosphoproteome.</title>
        <authorList>
            <person name="Bian Y."/>
            <person name="Song C."/>
            <person name="Cheng K."/>
            <person name="Dong M."/>
            <person name="Wang F."/>
            <person name="Huang J."/>
            <person name="Sun D."/>
            <person name="Wang L."/>
            <person name="Ye M."/>
            <person name="Zou H."/>
        </authorList>
    </citation>
    <scope>IDENTIFICATION BY MASS SPECTROMETRY [LARGE SCALE ANALYSIS]</scope>
    <source>
        <tissue>Liver</tissue>
    </source>
</reference>
<reference key="16">
    <citation type="journal article" date="2015" name="Proteomics">
        <title>N-terminome analysis of the human mitochondrial proteome.</title>
        <authorList>
            <person name="Vaca Jacome A.S."/>
            <person name="Rabilloud T."/>
            <person name="Schaeffer-Reiss C."/>
            <person name="Rompais M."/>
            <person name="Ayoub D."/>
            <person name="Lane L."/>
            <person name="Bairoch A."/>
            <person name="Van Dorsselaer A."/>
            <person name="Carapito C."/>
        </authorList>
    </citation>
    <scope>IDENTIFICATION BY MASS SPECTROMETRY [LARGE SCALE ANALYSIS]</scope>
</reference>
<reference key="17">
    <citation type="journal article" date="2017" name="Biochim. Biophys. Acta">
        <title>The mitochondrial TMEM177 associates with COX20 during COX2 biogenesis.</title>
        <authorList>
            <person name="Lorenzi I."/>
            <person name="Oeljeklaus S."/>
            <person name="Aich A."/>
            <person name="Ronsoer C."/>
            <person name="Callegari S."/>
            <person name="Dudek J."/>
            <person name="Warscheid B."/>
            <person name="Dennerlein S."/>
            <person name="Rehling P."/>
        </authorList>
    </citation>
    <scope>IDENTIFICATION IN A COMPLEX WITH TMEM177; COA6; COX20; COX18; SCO1 AND SCO2</scope>
    <scope>INTERACTION WITH TMEM177 AND COX20</scope>
</reference>
<reference key="18">
    <citation type="journal article" date="2017" name="J. Biol. Chem.">
        <title>Human mitochondrial cytochrome c oxidase assembly factor COX18 acts transiently as a membrane insertase within the subunit 2 maturation module.</title>
        <authorList>
            <person name="Bourens M."/>
            <person name="Barrientos A."/>
        </authorList>
    </citation>
    <scope>INTERACTION WITH COX20</scope>
</reference>
<reference key="19">
    <citation type="journal article" date="2018" name="Biochim. Biophys. Acta">
        <title>COX16 is required for assembly of cytochrome c oxidase in human cells and is involved in copper delivery to COX2.</title>
        <authorList>
            <person name="Cerqua C."/>
            <person name="Morbidoni V."/>
            <person name="Desbats M.A."/>
            <person name="Doimo M."/>
            <person name="Frasson C."/>
            <person name="Sacconi S."/>
            <person name="Baldoin M.C."/>
            <person name="Sartori G."/>
            <person name="Basso G."/>
            <person name="Salviati L."/>
            <person name="Trevisson E."/>
        </authorList>
    </citation>
    <scope>INTERACTION WITH COX16</scope>
</reference>
<reference key="20">
    <citation type="journal article" date="2018" name="Elife">
        <title>COX16 promotes COX2 metallation and assembly during respiratory complex IV biogenesis.</title>
        <authorList>
            <person name="Aich A."/>
            <person name="Wang C."/>
            <person name="Chowdhury A."/>
            <person name="Ronsoer C."/>
            <person name="Pacheu-Grau D."/>
            <person name="Richter-Dennerlein R."/>
            <person name="Dennerlein S."/>
            <person name="Rehling P."/>
        </authorList>
    </citation>
    <scope>INTERACTION WITH COX16</scope>
</reference>
<reference key="21">
    <citation type="journal article" date="2017" name="Cell">
        <title>Architecture of human mitochondrial respiratory megacomplex I2III2IV2.</title>
        <authorList>
            <person name="Guo R."/>
            <person name="Zong S."/>
            <person name="Wu M."/>
            <person name="Gu J."/>
            <person name="Yang M."/>
        </authorList>
    </citation>
    <scope>STRUCTURE BY ELECTRON MICROSCOPY (3.90 ANGSTROMS)</scope>
    <scope>SUBUNIT</scope>
</reference>
<reference key="22">
    <citation type="journal article" date="2018" name="Cell Res.">
        <title>Structure of the intact 14-subunit human cytochrome c oxidase.</title>
        <authorList>
            <person name="Zong S."/>
            <person name="Wu M."/>
            <person name="Gu J."/>
            <person name="Liu T."/>
            <person name="Guo R."/>
            <person name="Yang M."/>
        </authorList>
    </citation>
    <scope>STRUCTURE BY ELECTRON MICROSCOPY (3.60 ANGSTROMS)</scope>
</reference>
<reference key="23">
    <citation type="journal article" date="1991" name="Hum. Genet.">
        <title>Normal variants of human mitochondrial DNA and translation products: the building of a reference data base.</title>
        <authorList>
            <person name="Marzuki S."/>
            <person name="Noer A.S."/>
            <person name="Lertrit P."/>
            <person name="Thyagarajan D."/>
            <person name="Kapsa R."/>
            <person name="Utthanaphol P."/>
            <person name="Byrne E."/>
        </authorList>
    </citation>
    <scope>VARIANTS ALA-11; PRO-123 AND MET-187</scope>
</reference>
<reference key="24">
    <citation type="journal article" date="1998" name="Nat. Genet.">
        <title>Somatic mutations of the mitochondrial genome in human colorectal tumours.</title>
        <authorList>
            <person name="Polyak K."/>
            <person name="Li Y."/>
            <person name="Zhu H."/>
            <person name="Lengauer C."/>
            <person name="Willson J.K.V."/>
            <person name="Markowitz S.D."/>
            <person name="Trush M.A."/>
            <person name="Kinzler K.W."/>
            <person name="Vogelstein B."/>
        </authorList>
    </citation>
    <scope>VARIANT COLORECTAL CANCER MET-142</scope>
</reference>
<reference key="25">
    <citation type="journal article" date="1999" name="Am. J. Hum. Genet.">
        <title>A missense mutation of cytochrome oxidase subunit II causes defective assembly and myopathy.</title>
        <authorList>
            <person name="Rahman S."/>
            <person name="Taanman J.-W."/>
            <person name="Cooper J.M."/>
            <person name="Nelson I."/>
            <person name="Hargreaves I."/>
            <person name="Meunier B."/>
            <person name="Hanna M.G."/>
            <person name="Garcia J.J."/>
            <person name="Capaldi R.A."/>
            <person name="Lake B.D."/>
            <person name="Leonard J.V."/>
            <person name="Schapira A.H.V."/>
        </authorList>
    </citation>
    <scope>VARIANT MT-C4D LYS-29</scope>
    <scope>CHARACTERIZATION OF VARIANT MT-C4D LYS-29</scope>
</reference>
<protein>
    <recommendedName>
        <fullName>Cytochrome c oxidase subunit 2</fullName>
        <ecNumber>7.1.1.9</ecNumber>
    </recommendedName>
    <alternativeName>
        <fullName>Cytochrome c oxidase polypeptide II</fullName>
    </alternativeName>
</protein>
<keyword id="KW-0002">3D-structure</keyword>
<keyword id="KW-0186">Copper</keyword>
<keyword id="KW-0225">Disease variant</keyword>
<keyword id="KW-0249">Electron transport</keyword>
<keyword id="KW-0460">Magnesium</keyword>
<keyword id="KW-0472">Membrane</keyword>
<keyword id="KW-0479">Metal-binding</keyword>
<keyword id="KW-0496">Mitochondrion</keyword>
<keyword id="KW-0999">Mitochondrion inner membrane</keyword>
<keyword id="KW-1274">Primary mitochondrial disease</keyword>
<keyword id="KW-1267">Proteomics identification</keyword>
<keyword id="KW-1185">Reference proteome</keyword>
<keyword id="KW-0679">Respiratory chain</keyword>
<keyword id="KW-1278">Translocase</keyword>
<keyword id="KW-0812">Transmembrane</keyword>
<keyword id="KW-1133">Transmembrane helix</keyword>
<keyword id="KW-0813">Transport</keyword>
<dbReference type="EC" id="7.1.1.9"/>
<dbReference type="EMBL" id="V00662">
    <property type="protein sequence ID" value="CAA24029.1"/>
    <property type="molecule type" value="Genomic_DNA"/>
</dbReference>
<dbReference type="EMBL" id="J01415">
    <property type="protein sequence ID" value="AAB58946.1"/>
    <property type="molecule type" value="Genomic_DNA"/>
</dbReference>
<dbReference type="EMBL" id="X15759">
    <property type="protein sequence ID" value="CAA33766.1"/>
    <property type="molecule type" value="mRNA"/>
</dbReference>
<dbReference type="EMBL" id="M25171">
    <property type="protein sequence ID" value="AAA31850.1"/>
    <property type="molecule type" value="Genomic_DNA"/>
</dbReference>
<dbReference type="EMBL" id="D38112">
    <property type="protein sequence ID" value="BAA07293.1"/>
    <property type="molecule type" value="Genomic_DNA"/>
</dbReference>
<dbReference type="EMBL" id="U12690">
    <property type="protein sequence ID" value="AAA20843.1"/>
    <property type="molecule type" value="Genomic_DNA"/>
</dbReference>
<dbReference type="EMBL" id="U12691">
    <property type="protein sequence ID" value="AAA20844.1"/>
    <property type="molecule type" value="Genomic_DNA"/>
</dbReference>
<dbReference type="EMBL" id="U12692">
    <property type="protein sequence ID" value="AAA20845.1"/>
    <property type="molecule type" value="Genomic_DNA"/>
</dbReference>
<dbReference type="EMBL" id="U12693">
    <property type="protein sequence ID" value="AAA20846.1"/>
    <property type="molecule type" value="Genomic_DNA"/>
</dbReference>
<dbReference type="EMBL" id="U12694">
    <property type="protein sequence ID" value="AAA20847.1"/>
    <property type="molecule type" value="Genomic_DNA"/>
</dbReference>
<dbReference type="EMBL" id="AF004339">
    <property type="protein sequence ID" value="AAB63450.1"/>
    <property type="molecule type" value="Genomic_DNA"/>
</dbReference>
<dbReference type="EMBL" id="AY339402">
    <property type="protein sequence ID" value="AAP89039.1"/>
    <property type="molecule type" value="Genomic_DNA"/>
</dbReference>
<dbReference type="EMBL" id="AY339403">
    <property type="protein sequence ID" value="AAP89052.1"/>
    <property type="molecule type" value="Genomic_DNA"/>
</dbReference>
<dbReference type="EMBL" id="AY339404">
    <property type="protein sequence ID" value="AAP89065.1"/>
    <property type="molecule type" value="Genomic_DNA"/>
</dbReference>
<dbReference type="EMBL" id="AY339405">
    <property type="protein sequence ID" value="AAP89078.1"/>
    <property type="molecule type" value="Genomic_DNA"/>
</dbReference>
<dbReference type="EMBL" id="AY339406">
    <property type="protein sequence ID" value="AAP89091.1"/>
    <property type="molecule type" value="Genomic_DNA"/>
</dbReference>
<dbReference type="EMBL" id="AY339407">
    <property type="protein sequence ID" value="AAP89104.1"/>
    <property type="molecule type" value="Genomic_DNA"/>
</dbReference>
<dbReference type="EMBL" id="AY339408">
    <property type="protein sequence ID" value="AAP89117.1"/>
    <property type="molecule type" value="Genomic_DNA"/>
</dbReference>
<dbReference type="EMBL" id="AY339409">
    <property type="protein sequence ID" value="AAP89130.1"/>
    <property type="molecule type" value="Genomic_DNA"/>
</dbReference>
<dbReference type="EMBL" id="AY339410">
    <property type="protein sequence ID" value="AAP89143.1"/>
    <property type="molecule type" value="Genomic_DNA"/>
</dbReference>
<dbReference type="EMBL" id="AY339411">
    <property type="protein sequence ID" value="AAP89156.1"/>
    <property type="molecule type" value="Genomic_DNA"/>
</dbReference>
<dbReference type="EMBL" id="AY339412">
    <property type="protein sequence ID" value="AAP89169.1"/>
    <property type="molecule type" value="Genomic_DNA"/>
</dbReference>
<dbReference type="EMBL" id="AY339413">
    <property type="protein sequence ID" value="AAP89182.1"/>
    <property type="molecule type" value="Genomic_DNA"/>
</dbReference>
<dbReference type="EMBL" id="AY339414">
    <property type="protein sequence ID" value="AAP89195.1"/>
    <property type="molecule type" value="Genomic_DNA"/>
</dbReference>
<dbReference type="EMBL" id="AY339415">
    <property type="protein sequence ID" value="AAP89208.1"/>
    <property type="molecule type" value="Genomic_DNA"/>
</dbReference>
<dbReference type="EMBL" id="AY339416">
    <property type="protein sequence ID" value="AAP89221.1"/>
    <property type="molecule type" value="Genomic_DNA"/>
</dbReference>
<dbReference type="EMBL" id="AY339417">
    <property type="protein sequence ID" value="AAP89234.1"/>
    <property type="molecule type" value="Genomic_DNA"/>
</dbReference>
<dbReference type="EMBL" id="AY339418">
    <property type="protein sequence ID" value="AAP89247.1"/>
    <property type="molecule type" value="Genomic_DNA"/>
</dbReference>
<dbReference type="EMBL" id="AY339419">
    <property type="protein sequence ID" value="AAP89260.1"/>
    <property type="molecule type" value="Genomic_DNA"/>
</dbReference>
<dbReference type="EMBL" id="AY339420">
    <property type="protein sequence ID" value="AAP89273.1"/>
    <property type="molecule type" value="Genomic_DNA"/>
</dbReference>
<dbReference type="EMBL" id="AY339421">
    <property type="protein sequence ID" value="AAP89286.1"/>
    <property type="molecule type" value="Genomic_DNA"/>
</dbReference>
<dbReference type="EMBL" id="AY339422">
    <property type="protein sequence ID" value="AAP89299.1"/>
    <property type="molecule type" value="Genomic_DNA"/>
</dbReference>
<dbReference type="EMBL" id="AY339423">
    <property type="protein sequence ID" value="AAP89312.1"/>
    <property type="molecule type" value="Genomic_DNA"/>
</dbReference>
<dbReference type="EMBL" id="AY339424">
    <property type="protein sequence ID" value="AAP89325.1"/>
    <property type="molecule type" value="Genomic_DNA"/>
</dbReference>
<dbReference type="EMBL" id="AY339425">
    <property type="protein sequence ID" value="AAP89338.1"/>
    <property type="molecule type" value="Genomic_DNA"/>
</dbReference>
<dbReference type="EMBL" id="AY339426">
    <property type="protein sequence ID" value="AAP89351.1"/>
    <property type="molecule type" value="Genomic_DNA"/>
</dbReference>
<dbReference type="EMBL" id="AY339427">
    <property type="protein sequence ID" value="AAP89364.1"/>
    <property type="molecule type" value="Genomic_DNA"/>
</dbReference>
<dbReference type="EMBL" id="AY339428">
    <property type="protein sequence ID" value="AAP89377.1"/>
    <property type="molecule type" value="Genomic_DNA"/>
</dbReference>
<dbReference type="EMBL" id="AY339429">
    <property type="protein sequence ID" value="AAP89390.1"/>
    <property type="molecule type" value="Genomic_DNA"/>
</dbReference>
<dbReference type="EMBL" id="AY339430">
    <property type="protein sequence ID" value="AAP89403.1"/>
    <property type="molecule type" value="Genomic_DNA"/>
</dbReference>
<dbReference type="EMBL" id="AY339431">
    <property type="protein sequence ID" value="AAP89416.1"/>
    <property type="molecule type" value="Genomic_DNA"/>
</dbReference>
<dbReference type="EMBL" id="AY339432">
    <property type="protein sequence ID" value="AAP89429.1"/>
    <property type="molecule type" value="Genomic_DNA"/>
</dbReference>
<dbReference type="EMBL" id="AY339433">
    <property type="protein sequence ID" value="AAP89442.1"/>
    <property type="molecule type" value="Genomic_DNA"/>
</dbReference>
<dbReference type="EMBL" id="AY339434">
    <property type="protein sequence ID" value="AAP89455.1"/>
    <property type="molecule type" value="Genomic_DNA"/>
</dbReference>
<dbReference type="EMBL" id="AY339435">
    <property type="protein sequence ID" value="AAP89468.1"/>
    <property type="molecule type" value="Genomic_DNA"/>
</dbReference>
<dbReference type="EMBL" id="AY339436">
    <property type="protein sequence ID" value="AAP89481.1"/>
    <property type="molecule type" value="Genomic_DNA"/>
</dbReference>
<dbReference type="EMBL" id="AY339437">
    <property type="protein sequence ID" value="AAP89494.1"/>
    <property type="molecule type" value="Genomic_DNA"/>
</dbReference>
<dbReference type="EMBL" id="AY339438">
    <property type="protein sequence ID" value="AAP89507.1"/>
    <property type="molecule type" value="Genomic_DNA"/>
</dbReference>
<dbReference type="EMBL" id="AY339439">
    <property type="protein sequence ID" value="AAP89520.1"/>
    <property type="molecule type" value="Genomic_DNA"/>
</dbReference>
<dbReference type="EMBL" id="AY339440">
    <property type="protein sequence ID" value="AAP89533.1"/>
    <property type="molecule type" value="Genomic_DNA"/>
</dbReference>
<dbReference type="EMBL" id="AY339441">
    <property type="protein sequence ID" value="AAP89546.1"/>
    <property type="molecule type" value="Genomic_DNA"/>
</dbReference>
<dbReference type="EMBL" id="AY339442">
    <property type="protein sequence ID" value="AAP89559.1"/>
    <property type="molecule type" value="Genomic_DNA"/>
</dbReference>
<dbReference type="EMBL" id="AY339443">
    <property type="protein sequence ID" value="AAP89572.1"/>
    <property type="molecule type" value="Genomic_DNA"/>
</dbReference>
<dbReference type="EMBL" id="AY339444">
    <property type="protein sequence ID" value="AAP89585.1"/>
    <property type="molecule type" value="Genomic_DNA"/>
</dbReference>
<dbReference type="EMBL" id="AY339445">
    <property type="protein sequence ID" value="AAP89598.1"/>
    <property type="molecule type" value="Genomic_DNA"/>
</dbReference>
<dbReference type="EMBL" id="AY339446">
    <property type="protein sequence ID" value="AAP89611.1"/>
    <property type="molecule type" value="Genomic_DNA"/>
</dbReference>
<dbReference type="EMBL" id="AY339447">
    <property type="protein sequence ID" value="AAP89624.1"/>
    <property type="molecule type" value="Genomic_DNA"/>
</dbReference>
<dbReference type="EMBL" id="AY339448">
    <property type="protein sequence ID" value="AAP89637.1"/>
    <property type="molecule type" value="Genomic_DNA"/>
</dbReference>
<dbReference type="EMBL" id="AY339449">
    <property type="protein sequence ID" value="AAP89650.1"/>
    <property type="molecule type" value="Genomic_DNA"/>
</dbReference>
<dbReference type="EMBL" id="AY339450">
    <property type="protein sequence ID" value="AAP89663.1"/>
    <property type="molecule type" value="Genomic_DNA"/>
</dbReference>
<dbReference type="EMBL" id="AY339451">
    <property type="protein sequence ID" value="AAP89676.1"/>
    <property type="molecule type" value="Genomic_DNA"/>
</dbReference>
<dbReference type="EMBL" id="AY339452">
    <property type="protein sequence ID" value="AAP89689.1"/>
    <property type="molecule type" value="Genomic_DNA"/>
</dbReference>
<dbReference type="EMBL" id="AY339453">
    <property type="protein sequence ID" value="AAP89702.1"/>
    <property type="molecule type" value="Genomic_DNA"/>
</dbReference>
<dbReference type="EMBL" id="AY339454">
    <property type="protein sequence ID" value="AAP89715.1"/>
    <property type="molecule type" value="Genomic_DNA"/>
</dbReference>
<dbReference type="EMBL" id="AY339455">
    <property type="protein sequence ID" value="AAP89728.1"/>
    <property type="molecule type" value="Genomic_DNA"/>
</dbReference>
<dbReference type="EMBL" id="AY339456">
    <property type="protein sequence ID" value="AAP89741.1"/>
    <property type="molecule type" value="Genomic_DNA"/>
</dbReference>
<dbReference type="EMBL" id="AY339457">
    <property type="protein sequence ID" value="AAP89754.1"/>
    <property type="molecule type" value="Genomic_DNA"/>
</dbReference>
<dbReference type="EMBL" id="AY339458">
    <property type="protein sequence ID" value="AAP89767.1"/>
    <property type="molecule type" value="Genomic_DNA"/>
</dbReference>
<dbReference type="EMBL" id="AY339459">
    <property type="protein sequence ID" value="AAP89780.1"/>
    <property type="molecule type" value="Genomic_DNA"/>
</dbReference>
<dbReference type="EMBL" id="AY339460">
    <property type="protein sequence ID" value="AAP89793.1"/>
    <property type="molecule type" value="Genomic_DNA"/>
</dbReference>
<dbReference type="EMBL" id="AY339461">
    <property type="protein sequence ID" value="AAP89806.1"/>
    <property type="molecule type" value="Genomic_DNA"/>
</dbReference>
<dbReference type="EMBL" id="AY339462">
    <property type="protein sequence ID" value="AAP89819.1"/>
    <property type="molecule type" value="Genomic_DNA"/>
</dbReference>
<dbReference type="EMBL" id="AY339463">
    <property type="protein sequence ID" value="AAP89832.1"/>
    <property type="molecule type" value="Genomic_DNA"/>
</dbReference>
<dbReference type="EMBL" id="AY339464">
    <property type="protein sequence ID" value="AAP89845.1"/>
    <property type="molecule type" value="Genomic_DNA"/>
</dbReference>
<dbReference type="EMBL" id="AY339465">
    <property type="protein sequence ID" value="AAP89858.1"/>
    <property type="molecule type" value="Genomic_DNA"/>
</dbReference>
<dbReference type="EMBL" id="AY339466">
    <property type="protein sequence ID" value="AAP89871.1"/>
    <property type="molecule type" value="Genomic_DNA"/>
</dbReference>
<dbReference type="EMBL" id="AY339467">
    <property type="protein sequence ID" value="AAP89884.1"/>
    <property type="molecule type" value="Genomic_DNA"/>
</dbReference>
<dbReference type="EMBL" id="AY339468">
    <property type="protein sequence ID" value="AAP89897.1"/>
    <property type="molecule type" value="Genomic_DNA"/>
</dbReference>
<dbReference type="EMBL" id="AY339469">
    <property type="protein sequence ID" value="AAP89910.1"/>
    <property type="molecule type" value="Genomic_DNA"/>
</dbReference>
<dbReference type="EMBL" id="AY339470">
    <property type="protein sequence ID" value="AAP89923.1"/>
    <property type="molecule type" value="Genomic_DNA"/>
</dbReference>
<dbReference type="EMBL" id="AY339471">
    <property type="protein sequence ID" value="AAP89936.1"/>
    <property type="molecule type" value="Genomic_DNA"/>
</dbReference>
<dbReference type="EMBL" id="AY339472">
    <property type="protein sequence ID" value="AAP89949.1"/>
    <property type="molecule type" value="Genomic_DNA"/>
</dbReference>
<dbReference type="EMBL" id="AY339473">
    <property type="protein sequence ID" value="AAP89962.1"/>
    <property type="molecule type" value="Genomic_DNA"/>
</dbReference>
<dbReference type="EMBL" id="AY339474">
    <property type="protein sequence ID" value="AAP89975.1"/>
    <property type="molecule type" value="Genomic_DNA"/>
</dbReference>
<dbReference type="EMBL" id="AY339475">
    <property type="protein sequence ID" value="AAP89988.1"/>
    <property type="molecule type" value="Genomic_DNA"/>
</dbReference>
<dbReference type="EMBL" id="AY339476">
    <property type="protein sequence ID" value="AAP90001.1"/>
    <property type="molecule type" value="Genomic_DNA"/>
</dbReference>
<dbReference type="EMBL" id="AY339477">
    <property type="protein sequence ID" value="AAP90014.1"/>
    <property type="molecule type" value="Genomic_DNA"/>
</dbReference>
<dbReference type="EMBL" id="AY339478">
    <property type="protein sequence ID" value="AAP90027.1"/>
    <property type="molecule type" value="Genomic_DNA"/>
</dbReference>
<dbReference type="EMBL" id="AY339479">
    <property type="protein sequence ID" value="AAP90040.1"/>
    <property type="molecule type" value="Genomic_DNA"/>
</dbReference>
<dbReference type="EMBL" id="AY339480">
    <property type="protein sequence ID" value="AAP90053.1"/>
    <property type="molecule type" value="Genomic_DNA"/>
</dbReference>
<dbReference type="EMBL" id="AY339481">
    <property type="protein sequence ID" value="AAP90066.1"/>
    <property type="molecule type" value="Genomic_DNA"/>
</dbReference>
<dbReference type="EMBL" id="AY339482">
    <property type="protein sequence ID" value="AAP90079.1"/>
    <property type="molecule type" value="Genomic_DNA"/>
</dbReference>
<dbReference type="EMBL" id="AY339483">
    <property type="protein sequence ID" value="AAP90092.1"/>
    <property type="molecule type" value="Genomic_DNA"/>
</dbReference>
<dbReference type="EMBL" id="AY339484">
    <property type="protein sequence ID" value="AAP90105.1"/>
    <property type="molecule type" value="Genomic_DNA"/>
</dbReference>
<dbReference type="EMBL" id="AY339485">
    <property type="protein sequence ID" value="AAP90118.1"/>
    <property type="molecule type" value="Genomic_DNA"/>
</dbReference>
<dbReference type="EMBL" id="AY339486">
    <property type="protein sequence ID" value="AAP90131.1"/>
    <property type="molecule type" value="Genomic_DNA"/>
</dbReference>
<dbReference type="EMBL" id="AY339487">
    <property type="protein sequence ID" value="AAP90144.1"/>
    <property type="molecule type" value="Genomic_DNA"/>
</dbReference>
<dbReference type="EMBL" id="AY339488">
    <property type="protein sequence ID" value="AAP90157.1"/>
    <property type="molecule type" value="Genomic_DNA"/>
</dbReference>
<dbReference type="EMBL" id="AY339489">
    <property type="protein sequence ID" value="AAP90170.1"/>
    <property type="molecule type" value="Genomic_DNA"/>
</dbReference>
<dbReference type="EMBL" id="AY339490">
    <property type="protein sequence ID" value="AAP90183.1"/>
    <property type="molecule type" value="Genomic_DNA"/>
</dbReference>
<dbReference type="EMBL" id="AY339492">
    <property type="protein sequence ID" value="AAP90209.1"/>
    <property type="molecule type" value="Genomic_DNA"/>
</dbReference>
<dbReference type="EMBL" id="AY339493">
    <property type="protein sequence ID" value="AAP90222.1"/>
    <property type="molecule type" value="Genomic_DNA"/>
</dbReference>
<dbReference type="EMBL" id="AY339494">
    <property type="protein sequence ID" value="AAP90235.1"/>
    <property type="molecule type" value="Genomic_DNA"/>
</dbReference>
<dbReference type="EMBL" id="AY339495">
    <property type="protein sequence ID" value="AAP90248.1"/>
    <property type="molecule type" value="Genomic_DNA"/>
</dbReference>
<dbReference type="EMBL" id="AY339496">
    <property type="protein sequence ID" value="AAP90261.1"/>
    <property type="molecule type" value="Genomic_DNA"/>
</dbReference>
<dbReference type="EMBL" id="AY339498">
    <property type="protein sequence ID" value="AAP90287.1"/>
    <property type="molecule type" value="Genomic_DNA"/>
</dbReference>
<dbReference type="EMBL" id="AY339499">
    <property type="protein sequence ID" value="AAP90300.1"/>
    <property type="molecule type" value="Genomic_DNA"/>
</dbReference>
<dbReference type="EMBL" id="AY339500">
    <property type="protein sequence ID" value="AAP90313.1"/>
    <property type="molecule type" value="Genomic_DNA"/>
</dbReference>
<dbReference type="EMBL" id="AY339501">
    <property type="protein sequence ID" value="AAP90326.1"/>
    <property type="molecule type" value="Genomic_DNA"/>
</dbReference>
<dbReference type="EMBL" id="AY339502">
    <property type="protein sequence ID" value="AAP90339.1"/>
    <property type="molecule type" value="Genomic_DNA"/>
</dbReference>
<dbReference type="EMBL" id="AY339503">
    <property type="protein sequence ID" value="AAP90352.1"/>
    <property type="molecule type" value="Genomic_DNA"/>
</dbReference>
<dbReference type="EMBL" id="AY339504">
    <property type="protein sequence ID" value="AAP90365.1"/>
    <property type="molecule type" value="Genomic_DNA"/>
</dbReference>
<dbReference type="EMBL" id="AY339505">
    <property type="protein sequence ID" value="AAP90378.1"/>
    <property type="molecule type" value="Genomic_DNA"/>
</dbReference>
<dbReference type="EMBL" id="AY339506">
    <property type="protein sequence ID" value="AAP90391.1"/>
    <property type="molecule type" value="Genomic_DNA"/>
</dbReference>
<dbReference type="EMBL" id="AY339507">
    <property type="protein sequence ID" value="AAP90404.1"/>
    <property type="molecule type" value="Genomic_DNA"/>
</dbReference>
<dbReference type="EMBL" id="AY339508">
    <property type="protein sequence ID" value="AAP90417.1"/>
    <property type="molecule type" value="Genomic_DNA"/>
</dbReference>
<dbReference type="EMBL" id="AY339509">
    <property type="protein sequence ID" value="AAP90430.1"/>
    <property type="molecule type" value="Genomic_DNA"/>
</dbReference>
<dbReference type="EMBL" id="AY339510">
    <property type="protein sequence ID" value="AAP90443.1"/>
    <property type="molecule type" value="Genomic_DNA"/>
</dbReference>
<dbReference type="EMBL" id="AY339511">
    <property type="protein sequence ID" value="AAP90456.1"/>
    <property type="molecule type" value="Genomic_DNA"/>
</dbReference>
<dbReference type="EMBL" id="AY339512">
    <property type="protein sequence ID" value="AAP90469.1"/>
    <property type="molecule type" value="Genomic_DNA"/>
</dbReference>
<dbReference type="EMBL" id="AY339513">
    <property type="protein sequence ID" value="AAP90482.1"/>
    <property type="molecule type" value="Genomic_DNA"/>
</dbReference>
<dbReference type="EMBL" id="AY339514">
    <property type="protein sequence ID" value="AAP90495.1"/>
    <property type="molecule type" value="Genomic_DNA"/>
</dbReference>
<dbReference type="EMBL" id="AY339515">
    <property type="protein sequence ID" value="AAP90508.1"/>
    <property type="molecule type" value="Genomic_DNA"/>
</dbReference>
<dbReference type="EMBL" id="AY339516">
    <property type="protein sequence ID" value="AAP90521.1"/>
    <property type="molecule type" value="Genomic_DNA"/>
</dbReference>
<dbReference type="EMBL" id="AY339517">
    <property type="protein sequence ID" value="AAP90534.1"/>
    <property type="molecule type" value="Genomic_DNA"/>
</dbReference>
<dbReference type="EMBL" id="AY339518">
    <property type="protein sequence ID" value="AAP90547.1"/>
    <property type="molecule type" value="Genomic_DNA"/>
</dbReference>
<dbReference type="EMBL" id="AY339519">
    <property type="protein sequence ID" value="AAP90560.1"/>
    <property type="molecule type" value="Genomic_DNA"/>
</dbReference>
<dbReference type="EMBL" id="AY339520">
    <property type="protein sequence ID" value="AAP90573.1"/>
    <property type="molecule type" value="Genomic_DNA"/>
</dbReference>
<dbReference type="EMBL" id="AY339521">
    <property type="protein sequence ID" value="AAP90586.1"/>
    <property type="molecule type" value="Genomic_DNA"/>
</dbReference>
<dbReference type="EMBL" id="AY339522">
    <property type="protein sequence ID" value="AAP90599.1"/>
    <property type="molecule type" value="Genomic_DNA"/>
</dbReference>
<dbReference type="EMBL" id="AY339523">
    <property type="protein sequence ID" value="AAP90612.1"/>
    <property type="molecule type" value="Genomic_DNA"/>
</dbReference>
<dbReference type="EMBL" id="AY339524">
    <property type="protein sequence ID" value="AAP90625.1"/>
    <property type="molecule type" value="Genomic_DNA"/>
</dbReference>
<dbReference type="EMBL" id="AY339525">
    <property type="protein sequence ID" value="AAP90638.1"/>
    <property type="molecule type" value="Genomic_DNA"/>
</dbReference>
<dbReference type="EMBL" id="AY339526">
    <property type="protein sequence ID" value="AAP90651.1"/>
    <property type="molecule type" value="Genomic_DNA"/>
</dbReference>
<dbReference type="EMBL" id="AY339527">
    <property type="protein sequence ID" value="AAP90664.1"/>
    <property type="molecule type" value="Genomic_DNA"/>
</dbReference>
<dbReference type="EMBL" id="AY339528">
    <property type="protein sequence ID" value="AAP90677.1"/>
    <property type="molecule type" value="Genomic_DNA"/>
</dbReference>
<dbReference type="EMBL" id="AY339529">
    <property type="protein sequence ID" value="AAP90690.1"/>
    <property type="molecule type" value="Genomic_DNA"/>
</dbReference>
<dbReference type="EMBL" id="AY339530">
    <property type="protein sequence ID" value="AAP90703.1"/>
    <property type="molecule type" value="Genomic_DNA"/>
</dbReference>
<dbReference type="EMBL" id="AY339531">
    <property type="protein sequence ID" value="AAP90716.1"/>
    <property type="molecule type" value="Genomic_DNA"/>
</dbReference>
<dbReference type="EMBL" id="AY339532">
    <property type="protein sequence ID" value="AAP90729.1"/>
    <property type="molecule type" value="Genomic_DNA"/>
</dbReference>
<dbReference type="EMBL" id="AY339533">
    <property type="protein sequence ID" value="AAP90742.1"/>
    <property type="molecule type" value="Genomic_DNA"/>
</dbReference>
<dbReference type="EMBL" id="AY339534">
    <property type="protein sequence ID" value="AAP90755.1"/>
    <property type="molecule type" value="Genomic_DNA"/>
</dbReference>
<dbReference type="EMBL" id="AY339535">
    <property type="protein sequence ID" value="AAP90768.1"/>
    <property type="molecule type" value="Genomic_DNA"/>
</dbReference>
<dbReference type="EMBL" id="AY339536">
    <property type="protein sequence ID" value="AAP90781.1"/>
    <property type="molecule type" value="Genomic_DNA"/>
</dbReference>
<dbReference type="EMBL" id="AY339537">
    <property type="protein sequence ID" value="AAP90794.1"/>
    <property type="molecule type" value="Genomic_DNA"/>
</dbReference>
<dbReference type="EMBL" id="AY339538">
    <property type="protein sequence ID" value="AAP90807.1"/>
    <property type="molecule type" value="Genomic_DNA"/>
</dbReference>
<dbReference type="EMBL" id="AY339539">
    <property type="protein sequence ID" value="AAP90820.1"/>
    <property type="molecule type" value="Genomic_DNA"/>
</dbReference>
<dbReference type="EMBL" id="AY339540">
    <property type="protein sequence ID" value="AAP90833.1"/>
    <property type="molecule type" value="Genomic_DNA"/>
</dbReference>
<dbReference type="EMBL" id="AY339541">
    <property type="protein sequence ID" value="AAP90846.1"/>
    <property type="molecule type" value="Genomic_DNA"/>
</dbReference>
<dbReference type="EMBL" id="AY339543">
    <property type="protein sequence ID" value="AAP90872.1"/>
    <property type="molecule type" value="Genomic_DNA"/>
</dbReference>
<dbReference type="EMBL" id="AY339544">
    <property type="protein sequence ID" value="AAP90885.1"/>
    <property type="molecule type" value="Genomic_DNA"/>
</dbReference>
<dbReference type="EMBL" id="AY339545">
    <property type="protein sequence ID" value="AAP90898.1"/>
    <property type="molecule type" value="Genomic_DNA"/>
</dbReference>
<dbReference type="EMBL" id="AY339546">
    <property type="protein sequence ID" value="AAP90911.1"/>
    <property type="molecule type" value="Genomic_DNA"/>
</dbReference>
<dbReference type="EMBL" id="AY339547">
    <property type="protein sequence ID" value="AAP90924.1"/>
    <property type="molecule type" value="Genomic_DNA"/>
</dbReference>
<dbReference type="EMBL" id="AY339548">
    <property type="protein sequence ID" value="AAP90937.1"/>
    <property type="molecule type" value="Genomic_DNA"/>
</dbReference>
<dbReference type="EMBL" id="AY339549">
    <property type="protein sequence ID" value="AAP90950.1"/>
    <property type="molecule type" value="Genomic_DNA"/>
</dbReference>
<dbReference type="EMBL" id="AY339550">
    <property type="protein sequence ID" value="AAP90963.1"/>
    <property type="molecule type" value="Genomic_DNA"/>
</dbReference>
<dbReference type="EMBL" id="AY339551">
    <property type="protein sequence ID" value="AAP90976.1"/>
    <property type="molecule type" value="Genomic_DNA"/>
</dbReference>
<dbReference type="EMBL" id="AY339552">
    <property type="protein sequence ID" value="AAP90989.1"/>
    <property type="molecule type" value="Genomic_DNA"/>
</dbReference>
<dbReference type="EMBL" id="AY339553">
    <property type="protein sequence ID" value="AAP91002.1"/>
    <property type="molecule type" value="Genomic_DNA"/>
</dbReference>
<dbReference type="EMBL" id="AY339555">
    <property type="protein sequence ID" value="AAP91028.1"/>
    <property type="molecule type" value="Genomic_DNA"/>
</dbReference>
<dbReference type="EMBL" id="AY339556">
    <property type="protein sequence ID" value="AAP91041.1"/>
    <property type="molecule type" value="Genomic_DNA"/>
</dbReference>
<dbReference type="EMBL" id="AY339557">
    <property type="protein sequence ID" value="AAP91054.1"/>
    <property type="molecule type" value="Genomic_DNA"/>
</dbReference>
<dbReference type="EMBL" id="AY339558">
    <property type="protein sequence ID" value="AAP91067.1"/>
    <property type="molecule type" value="Genomic_DNA"/>
</dbReference>
<dbReference type="EMBL" id="AY339559">
    <property type="protein sequence ID" value="AAP91080.1"/>
    <property type="molecule type" value="Genomic_DNA"/>
</dbReference>
<dbReference type="EMBL" id="AY339560">
    <property type="protein sequence ID" value="AAP91093.1"/>
    <property type="molecule type" value="Genomic_DNA"/>
</dbReference>
<dbReference type="EMBL" id="AY339561">
    <property type="protein sequence ID" value="AAP91106.1"/>
    <property type="molecule type" value="Genomic_DNA"/>
</dbReference>
<dbReference type="EMBL" id="AY339562">
    <property type="protein sequence ID" value="AAP91119.1"/>
    <property type="molecule type" value="Genomic_DNA"/>
</dbReference>
<dbReference type="EMBL" id="AY339563">
    <property type="protein sequence ID" value="AAP91132.1"/>
    <property type="molecule type" value="Genomic_DNA"/>
</dbReference>
<dbReference type="EMBL" id="AY339564">
    <property type="protein sequence ID" value="AAP91145.1"/>
    <property type="molecule type" value="Genomic_DNA"/>
</dbReference>
<dbReference type="EMBL" id="AY339565">
    <property type="protein sequence ID" value="AAP91158.1"/>
    <property type="molecule type" value="Genomic_DNA"/>
</dbReference>
<dbReference type="EMBL" id="AY339566">
    <property type="protein sequence ID" value="AAP91171.1"/>
    <property type="molecule type" value="Genomic_DNA"/>
</dbReference>
<dbReference type="EMBL" id="AY339567">
    <property type="protein sequence ID" value="AAP91184.1"/>
    <property type="molecule type" value="Genomic_DNA"/>
</dbReference>
<dbReference type="EMBL" id="AY339568">
    <property type="protein sequence ID" value="AAP91197.1"/>
    <property type="molecule type" value="Genomic_DNA"/>
</dbReference>
<dbReference type="EMBL" id="AY339569">
    <property type="protein sequence ID" value="AAP91210.1"/>
    <property type="molecule type" value="Genomic_DNA"/>
</dbReference>
<dbReference type="EMBL" id="AY339570">
    <property type="protein sequence ID" value="AAP91223.1"/>
    <property type="molecule type" value="Genomic_DNA"/>
</dbReference>
<dbReference type="EMBL" id="AY339571">
    <property type="protein sequence ID" value="AAP91236.1"/>
    <property type="molecule type" value="Genomic_DNA"/>
</dbReference>
<dbReference type="EMBL" id="AY339572">
    <property type="protein sequence ID" value="AAP91249.1"/>
    <property type="molecule type" value="Genomic_DNA"/>
</dbReference>
<dbReference type="EMBL" id="AY339573">
    <property type="protein sequence ID" value="AAP91262.1"/>
    <property type="molecule type" value="Genomic_DNA"/>
</dbReference>
<dbReference type="EMBL" id="AY339574">
    <property type="protein sequence ID" value="AAP91275.1"/>
    <property type="molecule type" value="Genomic_DNA"/>
</dbReference>
<dbReference type="EMBL" id="AY339575">
    <property type="protein sequence ID" value="AAP91288.1"/>
    <property type="molecule type" value="Genomic_DNA"/>
</dbReference>
<dbReference type="EMBL" id="AY339576">
    <property type="protein sequence ID" value="AAP91301.1"/>
    <property type="molecule type" value="Genomic_DNA"/>
</dbReference>
<dbReference type="EMBL" id="AY339577">
    <property type="protein sequence ID" value="AAP91314.1"/>
    <property type="molecule type" value="Genomic_DNA"/>
</dbReference>
<dbReference type="EMBL" id="AY339578">
    <property type="protein sequence ID" value="AAP91327.1"/>
    <property type="molecule type" value="Genomic_DNA"/>
</dbReference>
<dbReference type="EMBL" id="AY339579">
    <property type="protein sequence ID" value="AAP91340.1"/>
    <property type="molecule type" value="Genomic_DNA"/>
</dbReference>
<dbReference type="EMBL" id="AY339580">
    <property type="protein sequence ID" value="AAP91353.1"/>
    <property type="molecule type" value="Genomic_DNA"/>
</dbReference>
<dbReference type="EMBL" id="AY339581">
    <property type="protein sequence ID" value="AAP91366.1"/>
    <property type="molecule type" value="Genomic_DNA"/>
</dbReference>
<dbReference type="EMBL" id="AY339582">
    <property type="protein sequence ID" value="AAP91379.1"/>
    <property type="molecule type" value="Genomic_DNA"/>
</dbReference>
<dbReference type="EMBL" id="AY339583">
    <property type="protein sequence ID" value="AAP91392.1"/>
    <property type="molecule type" value="Genomic_DNA"/>
</dbReference>
<dbReference type="EMBL" id="AY339584">
    <property type="protein sequence ID" value="AAP91405.1"/>
    <property type="molecule type" value="Genomic_DNA"/>
</dbReference>
<dbReference type="EMBL" id="AY339585">
    <property type="protein sequence ID" value="AAP91418.1"/>
    <property type="molecule type" value="Genomic_DNA"/>
</dbReference>
<dbReference type="EMBL" id="AY339586">
    <property type="protein sequence ID" value="AAP91431.1"/>
    <property type="molecule type" value="Genomic_DNA"/>
</dbReference>
<dbReference type="EMBL" id="AY339587">
    <property type="protein sequence ID" value="AAP91444.1"/>
    <property type="molecule type" value="Genomic_DNA"/>
</dbReference>
<dbReference type="EMBL" id="AY339588">
    <property type="protein sequence ID" value="AAP91457.1"/>
    <property type="molecule type" value="Genomic_DNA"/>
</dbReference>
<dbReference type="EMBL" id="AY339589">
    <property type="protein sequence ID" value="AAP91470.1"/>
    <property type="molecule type" value="Genomic_DNA"/>
</dbReference>
<dbReference type="EMBL" id="AY339590">
    <property type="protein sequence ID" value="AAP91483.1"/>
    <property type="molecule type" value="Genomic_DNA"/>
</dbReference>
<dbReference type="EMBL" id="AY339591">
    <property type="protein sequence ID" value="AAP91496.1"/>
    <property type="molecule type" value="Genomic_DNA"/>
</dbReference>
<dbReference type="EMBL" id="AY339592">
    <property type="protein sequence ID" value="AAP91509.1"/>
    <property type="molecule type" value="Genomic_DNA"/>
</dbReference>
<dbReference type="EMBL" id="AY339593">
    <property type="protein sequence ID" value="AAP91522.1"/>
    <property type="molecule type" value="Genomic_DNA"/>
</dbReference>
<dbReference type="EMBL" id="AF346963">
    <property type="protein sequence ID" value="AAK17210.1"/>
    <property type="molecule type" value="Genomic_DNA"/>
</dbReference>
<dbReference type="EMBL" id="AF346964">
    <property type="protein sequence ID" value="AAK17223.1"/>
    <property type="molecule type" value="Genomic_DNA"/>
</dbReference>
<dbReference type="EMBL" id="AF346965">
    <property type="protein sequence ID" value="AAK17236.1"/>
    <property type="molecule type" value="Genomic_DNA"/>
</dbReference>
<dbReference type="EMBL" id="AF346966">
    <property type="protein sequence ID" value="AAK17249.1"/>
    <property type="molecule type" value="Genomic_DNA"/>
</dbReference>
<dbReference type="EMBL" id="AF346967">
    <property type="protein sequence ID" value="AAK17262.1"/>
    <property type="molecule type" value="Genomic_DNA"/>
</dbReference>
<dbReference type="EMBL" id="AF346970">
    <property type="protein sequence ID" value="AAK17301.1"/>
    <property type="molecule type" value="Genomic_DNA"/>
</dbReference>
<dbReference type="EMBL" id="AF346972">
    <property type="protein sequence ID" value="AAK17327.1"/>
    <property type="molecule type" value="Genomic_DNA"/>
</dbReference>
<dbReference type="EMBL" id="AF346973">
    <property type="protein sequence ID" value="AAK17340.1"/>
    <property type="molecule type" value="Genomic_DNA"/>
</dbReference>
<dbReference type="EMBL" id="AF346974">
    <property type="protein sequence ID" value="AAK17353.1"/>
    <property type="molecule type" value="Genomic_DNA"/>
</dbReference>
<dbReference type="EMBL" id="AF346975">
    <property type="protein sequence ID" value="AAK17366.1"/>
    <property type="molecule type" value="Genomic_DNA"/>
</dbReference>
<dbReference type="EMBL" id="AF346976">
    <property type="protein sequence ID" value="AAK17379.1"/>
    <property type="molecule type" value="Genomic_DNA"/>
</dbReference>
<dbReference type="EMBL" id="AF346977">
    <property type="protein sequence ID" value="AAK17392.1"/>
    <property type="molecule type" value="Genomic_DNA"/>
</dbReference>
<dbReference type="EMBL" id="AF346978">
    <property type="protein sequence ID" value="AAK17405.1"/>
    <property type="molecule type" value="Genomic_DNA"/>
</dbReference>
<dbReference type="EMBL" id="AF346979">
    <property type="protein sequence ID" value="AAK17418.1"/>
    <property type="molecule type" value="Genomic_DNA"/>
</dbReference>
<dbReference type="EMBL" id="AF346980">
    <property type="protein sequence ID" value="AAK17431.1"/>
    <property type="molecule type" value="Genomic_DNA"/>
</dbReference>
<dbReference type="EMBL" id="AF346981">
    <property type="protein sequence ID" value="AAK17444.1"/>
    <property type="molecule type" value="Genomic_DNA"/>
</dbReference>
<dbReference type="EMBL" id="AF346982">
    <property type="protein sequence ID" value="AAK17457.1"/>
    <property type="molecule type" value="Genomic_DNA"/>
</dbReference>
<dbReference type="EMBL" id="AF346983">
    <property type="protein sequence ID" value="AAK17470.1"/>
    <property type="molecule type" value="Genomic_DNA"/>
</dbReference>
<dbReference type="EMBL" id="AF346984">
    <property type="protein sequence ID" value="AAK17483.1"/>
    <property type="molecule type" value="Genomic_DNA"/>
</dbReference>
<dbReference type="EMBL" id="AF346985">
    <property type="protein sequence ID" value="AAK17496.1"/>
    <property type="molecule type" value="Genomic_DNA"/>
</dbReference>
<dbReference type="EMBL" id="AF346986">
    <property type="protein sequence ID" value="AAK17509.1"/>
    <property type="molecule type" value="Genomic_DNA"/>
</dbReference>
<dbReference type="EMBL" id="AF346988">
    <property type="protein sequence ID" value="AAK17535.1"/>
    <property type="molecule type" value="Genomic_DNA"/>
</dbReference>
<dbReference type="EMBL" id="AF346989">
    <property type="protein sequence ID" value="AAK17548.1"/>
    <property type="molecule type" value="Genomic_DNA"/>
</dbReference>
<dbReference type="EMBL" id="AF346990">
    <property type="protein sequence ID" value="AAK17561.1"/>
    <property type="molecule type" value="Genomic_DNA"/>
</dbReference>
<dbReference type="EMBL" id="AF346991">
    <property type="protein sequence ID" value="AAK17574.1"/>
    <property type="molecule type" value="Genomic_DNA"/>
</dbReference>
<dbReference type="EMBL" id="AF346993">
    <property type="protein sequence ID" value="AAK17600.1"/>
    <property type="molecule type" value="Genomic_DNA"/>
</dbReference>
<dbReference type="EMBL" id="AF346994">
    <property type="protein sequence ID" value="AAK17613.1"/>
    <property type="molecule type" value="Genomic_DNA"/>
</dbReference>
<dbReference type="EMBL" id="AF346995">
    <property type="protein sequence ID" value="AAK17626.1"/>
    <property type="molecule type" value="Genomic_DNA"/>
</dbReference>
<dbReference type="EMBL" id="AF346998">
    <property type="protein sequence ID" value="AAK17665.1"/>
    <property type="molecule type" value="Genomic_DNA"/>
</dbReference>
<dbReference type="EMBL" id="AF346999">
    <property type="protein sequence ID" value="AAK17678.1"/>
    <property type="molecule type" value="Genomic_DNA"/>
</dbReference>
<dbReference type="EMBL" id="AF347000">
    <property type="protein sequence ID" value="AAK17691.1"/>
    <property type="molecule type" value="Genomic_DNA"/>
</dbReference>
<dbReference type="EMBL" id="AF347001">
    <property type="protein sequence ID" value="AAK17704.1"/>
    <property type="molecule type" value="Genomic_DNA"/>
</dbReference>
<dbReference type="EMBL" id="AF347002">
    <property type="protein sequence ID" value="AAK17717.1"/>
    <property type="molecule type" value="Genomic_DNA"/>
</dbReference>
<dbReference type="EMBL" id="AF347003">
    <property type="protein sequence ID" value="AAK17730.1"/>
    <property type="molecule type" value="Genomic_DNA"/>
</dbReference>
<dbReference type="EMBL" id="AF347004">
    <property type="protein sequence ID" value="AAK17743.1"/>
    <property type="molecule type" value="Genomic_DNA"/>
</dbReference>
<dbReference type="EMBL" id="AF347005">
    <property type="protein sequence ID" value="AAK17756.1"/>
    <property type="molecule type" value="Genomic_DNA"/>
</dbReference>
<dbReference type="EMBL" id="AF347006">
    <property type="protein sequence ID" value="AAK17769.1"/>
    <property type="molecule type" value="Genomic_DNA"/>
</dbReference>
<dbReference type="EMBL" id="AF347007">
    <property type="protein sequence ID" value="AAK17782.1"/>
    <property type="molecule type" value="Genomic_DNA"/>
</dbReference>
<dbReference type="EMBL" id="AF347009">
    <property type="protein sequence ID" value="AAK17808.1"/>
    <property type="molecule type" value="Genomic_DNA"/>
</dbReference>
<dbReference type="EMBL" id="AF347010">
    <property type="protein sequence ID" value="AAK17821.1"/>
    <property type="molecule type" value="Genomic_DNA"/>
</dbReference>
<dbReference type="EMBL" id="AF347011">
    <property type="protein sequence ID" value="AAK17834.1"/>
    <property type="molecule type" value="Genomic_DNA"/>
</dbReference>
<dbReference type="EMBL" id="AF347014">
    <property type="protein sequence ID" value="AAK17873.1"/>
    <property type="molecule type" value="Genomic_DNA"/>
</dbReference>
<dbReference type="EMBL" id="AF347015">
    <property type="protein sequence ID" value="AAK17886.1"/>
    <property type="molecule type" value="Genomic_DNA"/>
</dbReference>
<dbReference type="EMBL" id="AY289051">
    <property type="protein sequence ID" value="AAP47883.1"/>
    <property type="molecule type" value="Genomic_DNA"/>
</dbReference>
<dbReference type="EMBL" id="AY289053">
    <property type="protein sequence ID" value="AAP47909.1"/>
    <property type="molecule type" value="Genomic_DNA"/>
</dbReference>
<dbReference type="EMBL" id="AY289054">
    <property type="protein sequence ID" value="AAP47922.1"/>
    <property type="molecule type" value="Genomic_DNA"/>
</dbReference>
<dbReference type="EMBL" id="AY289056">
    <property type="protein sequence ID" value="AAP47948.1"/>
    <property type="molecule type" value="Genomic_DNA"/>
</dbReference>
<dbReference type="EMBL" id="AY289057">
    <property type="protein sequence ID" value="AAP47961.1"/>
    <property type="molecule type" value="Genomic_DNA"/>
</dbReference>
<dbReference type="EMBL" id="AY289058">
    <property type="protein sequence ID" value="AAP47974.1"/>
    <property type="molecule type" value="Genomic_DNA"/>
</dbReference>
<dbReference type="EMBL" id="AY289059">
    <property type="protein sequence ID" value="AAP47987.1"/>
    <property type="molecule type" value="Genomic_DNA"/>
</dbReference>
<dbReference type="EMBL" id="AY289060">
    <property type="protein sequence ID" value="AAP48000.1"/>
    <property type="molecule type" value="Genomic_DNA"/>
</dbReference>
<dbReference type="EMBL" id="AY289061">
    <property type="protein sequence ID" value="AAP48013.1"/>
    <property type="molecule type" value="Genomic_DNA"/>
</dbReference>
<dbReference type="EMBL" id="AY289062">
    <property type="protein sequence ID" value="AAP48026.1"/>
    <property type="molecule type" value="Genomic_DNA"/>
</dbReference>
<dbReference type="EMBL" id="AY289063">
    <property type="protein sequence ID" value="AAP48039.1"/>
    <property type="molecule type" value="Genomic_DNA"/>
</dbReference>
<dbReference type="EMBL" id="AY289064">
    <property type="protein sequence ID" value="AAP48052.1"/>
    <property type="molecule type" value="Genomic_DNA"/>
</dbReference>
<dbReference type="EMBL" id="AY289065">
    <property type="protein sequence ID" value="AAP48065.1"/>
    <property type="molecule type" value="Genomic_DNA"/>
</dbReference>
<dbReference type="EMBL" id="AY289066">
    <property type="protein sequence ID" value="AAP48078.1"/>
    <property type="molecule type" value="Genomic_DNA"/>
</dbReference>
<dbReference type="EMBL" id="AY289067">
    <property type="protein sequence ID" value="AAP48091.1"/>
    <property type="molecule type" value="Genomic_DNA"/>
</dbReference>
<dbReference type="EMBL" id="AY289068">
    <property type="protein sequence ID" value="AAP48104.1"/>
    <property type="molecule type" value="Genomic_DNA"/>
</dbReference>
<dbReference type="EMBL" id="AY289069">
    <property type="protein sequence ID" value="AAP48117.1"/>
    <property type="molecule type" value="Genomic_DNA"/>
</dbReference>
<dbReference type="EMBL" id="AY289071">
    <property type="protein sequence ID" value="AAP48143.1"/>
    <property type="molecule type" value="Genomic_DNA"/>
</dbReference>
<dbReference type="EMBL" id="AY289072">
    <property type="protein sequence ID" value="AAP48156.1"/>
    <property type="molecule type" value="Genomic_DNA"/>
</dbReference>
<dbReference type="EMBL" id="AY289073">
    <property type="protein sequence ID" value="AAP48169.1"/>
    <property type="molecule type" value="Genomic_DNA"/>
</dbReference>
<dbReference type="EMBL" id="AY289074">
    <property type="protein sequence ID" value="AAP48182.1"/>
    <property type="molecule type" value="Genomic_DNA"/>
</dbReference>
<dbReference type="EMBL" id="AY289075">
    <property type="protein sequence ID" value="AAP48195.1"/>
    <property type="molecule type" value="Genomic_DNA"/>
</dbReference>
<dbReference type="EMBL" id="AY289076">
    <property type="protein sequence ID" value="AAP48208.1"/>
    <property type="molecule type" value="Genomic_DNA"/>
</dbReference>
<dbReference type="EMBL" id="AY289077">
    <property type="protein sequence ID" value="AAP48221.1"/>
    <property type="molecule type" value="Genomic_DNA"/>
</dbReference>
<dbReference type="EMBL" id="AY289078">
    <property type="protein sequence ID" value="AAP48234.1"/>
    <property type="molecule type" value="Genomic_DNA"/>
</dbReference>
<dbReference type="EMBL" id="AY289079">
    <property type="protein sequence ID" value="AAP48247.1"/>
    <property type="molecule type" value="Genomic_DNA"/>
</dbReference>
<dbReference type="EMBL" id="AY289080">
    <property type="protein sequence ID" value="AAP48260.1"/>
    <property type="molecule type" value="Genomic_DNA"/>
</dbReference>
<dbReference type="EMBL" id="AY289081">
    <property type="protein sequence ID" value="AAP48273.1"/>
    <property type="molecule type" value="Genomic_DNA"/>
</dbReference>
<dbReference type="EMBL" id="AY289082">
    <property type="protein sequence ID" value="AAP48286.1"/>
    <property type="molecule type" value="Genomic_DNA"/>
</dbReference>
<dbReference type="EMBL" id="AY289083">
    <property type="protein sequence ID" value="AAP48299.1"/>
    <property type="molecule type" value="Genomic_DNA"/>
</dbReference>
<dbReference type="EMBL" id="AY289084">
    <property type="protein sequence ID" value="AAP48312.1"/>
    <property type="molecule type" value="Genomic_DNA"/>
</dbReference>
<dbReference type="EMBL" id="AY289085">
    <property type="protein sequence ID" value="AAP48325.1"/>
    <property type="molecule type" value="Genomic_DNA"/>
</dbReference>
<dbReference type="EMBL" id="AY289086">
    <property type="protein sequence ID" value="AAP48338.1"/>
    <property type="molecule type" value="Genomic_DNA"/>
</dbReference>
<dbReference type="EMBL" id="AY289087">
    <property type="protein sequence ID" value="AAP48351.1"/>
    <property type="molecule type" value="Genomic_DNA"/>
</dbReference>
<dbReference type="EMBL" id="AY289088">
    <property type="protein sequence ID" value="AAP48364.1"/>
    <property type="molecule type" value="Genomic_DNA"/>
</dbReference>
<dbReference type="EMBL" id="AY289089">
    <property type="protein sequence ID" value="AAP48377.1"/>
    <property type="molecule type" value="Genomic_DNA"/>
</dbReference>
<dbReference type="EMBL" id="AY289090">
    <property type="protein sequence ID" value="AAP48390.1"/>
    <property type="molecule type" value="Genomic_DNA"/>
</dbReference>
<dbReference type="EMBL" id="AY289091">
    <property type="protein sequence ID" value="AAP48403.1"/>
    <property type="molecule type" value="Genomic_DNA"/>
</dbReference>
<dbReference type="EMBL" id="AY289092">
    <property type="protein sequence ID" value="AAP48416.1"/>
    <property type="molecule type" value="Genomic_DNA"/>
</dbReference>
<dbReference type="EMBL" id="AY289093">
    <property type="protein sequence ID" value="AAP48428.1"/>
    <property type="molecule type" value="Genomic_DNA"/>
</dbReference>
<dbReference type="EMBL" id="AY289094">
    <property type="protein sequence ID" value="AAP48441.1"/>
    <property type="molecule type" value="Genomic_DNA"/>
</dbReference>
<dbReference type="EMBL" id="AY289095">
    <property type="protein sequence ID" value="AAP48454.1"/>
    <property type="molecule type" value="Genomic_DNA"/>
</dbReference>
<dbReference type="EMBL" id="AY289096">
    <property type="protein sequence ID" value="AAP48467.1"/>
    <property type="molecule type" value="Genomic_DNA"/>
</dbReference>
<dbReference type="EMBL" id="AY289099">
    <property type="protein sequence ID" value="AAP48506.1"/>
    <property type="molecule type" value="Genomic_DNA"/>
</dbReference>
<dbReference type="EMBL" id="AY289100">
    <property type="protein sequence ID" value="AAP48519.1"/>
    <property type="molecule type" value="Genomic_DNA"/>
</dbReference>
<dbReference type="EMBL" id="AY289102">
    <property type="protein sequence ID" value="AAP48545.1"/>
    <property type="molecule type" value="Genomic_DNA"/>
</dbReference>
<dbReference type="EMBL" id="AY495090">
    <property type="protein sequence ID" value="AAR92499.1"/>
    <property type="molecule type" value="Genomic_DNA"/>
</dbReference>
<dbReference type="EMBL" id="AY495091">
    <property type="protein sequence ID" value="AAR92512.1"/>
    <property type="molecule type" value="Genomic_DNA"/>
</dbReference>
<dbReference type="EMBL" id="AY495092">
    <property type="protein sequence ID" value="AAR92525.1"/>
    <property type="molecule type" value="Genomic_DNA"/>
</dbReference>
<dbReference type="EMBL" id="AY495093">
    <property type="protein sequence ID" value="AAR92538.1"/>
    <property type="molecule type" value="Genomic_DNA"/>
</dbReference>
<dbReference type="EMBL" id="AY495094">
    <property type="protein sequence ID" value="AAR92551.1"/>
    <property type="molecule type" value="Genomic_DNA"/>
</dbReference>
<dbReference type="EMBL" id="AY495095">
    <property type="protein sequence ID" value="AAR92564.1"/>
    <property type="molecule type" value="Genomic_DNA"/>
</dbReference>
<dbReference type="EMBL" id="AY495096">
    <property type="protein sequence ID" value="AAR92577.1"/>
    <property type="molecule type" value="Genomic_DNA"/>
</dbReference>
<dbReference type="EMBL" id="AY495097">
    <property type="protein sequence ID" value="AAR92590.1"/>
    <property type="molecule type" value="Genomic_DNA"/>
</dbReference>
<dbReference type="EMBL" id="AY495098">
    <property type="protein sequence ID" value="AAR92603.1"/>
    <property type="molecule type" value="Genomic_DNA"/>
</dbReference>
<dbReference type="EMBL" id="AY495099">
    <property type="protein sequence ID" value="AAR92616.1"/>
    <property type="molecule type" value="Genomic_DNA"/>
</dbReference>
<dbReference type="EMBL" id="AY495100">
    <property type="protein sequence ID" value="AAR92629.1"/>
    <property type="molecule type" value="Genomic_DNA"/>
</dbReference>
<dbReference type="EMBL" id="AY495101">
    <property type="protein sequence ID" value="AAR92642.1"/>
    <property type="molecule type" value="Genomic_DNA"/>
</dbReference>
<dbReference type="EMBL" id="AY495102">
    <property type="protein sequence ID" value="AAR92655.1"/>
    <property type="molecule type" value="Genomic_DNA"/>
</dbReference>
<dbReference type="EMBL" id="AY495103">
    <property type="protein sequence ID" value="AAR92668.1"/>
    <property type="molecule type" value="Genomic_DNA"/>
</dbReference>
<dbReference type="EMBL" id="AY495104">
    <property type="protein sequence ID" value="AAR92681.1"/>
    <property type="molecule type" value="Genomic_DNA"/>
</dbReference>
<dbReference type="EMBL" id="AY495105">
    <property type="protein sequence ID" value="AAR92694.1"/>
    <property type="molecule type" value="Genomic_DNA"/>
</dbReference>
<dbReference type="EMBL" id="AY495106">
    <property type="protein sequence ID" value="AAR92707.1"/>
    <property type="molecule type" value="Genomic_DNA"/>
</dbReference>
<dbReference type="EMBL" id="AY495107">
    <property type="protein sequence ID" value="AAR92720.1"/>
    <property type="molecule type" value="Genomic_DNA"/>
</dbReference>
<dbReference type="EMBL" id="AY495108">
    <property type="protein sequence ID" value="AAR92733.1"/>
    <property type="molecule type" value="Genomic_DNA"/>
</dbReference>
<dbReference type="EMBL" id="AY495109">
    <property type="protein sequence ID" value="AAR92746.1"/>
    <property type="molecule type" value="Genomic_DNA"/>
</dbReference>
<dbReference type="EMBL" id="AY495110">
    <property type="protein sequence ID" value="AAR92759.1"/>
    <property type="molecule type" value="Genomic_DNA"/>
</dbReference>
<dbReference type="EMBL" id="AY495111">
    <property type="protein sequence ID" value="AAR92772.1"/>
    <property type="molecule type" value="Genomic_DNA"/>
</dbReference>
<dbReference type="EMBL" id="AY495112">
    <property type="protein sequence ID" value="AAR92785.1"/>
    <property type="molecule type" value="Genomic_DNA"/>
</dbReference>
<dbReference type="EMBL" id="AY495113">
    <property type="protein sequence ID" value="AAR92798.1"/>
    <property type="molecule type" value="Genomic_DNA"/>
</dbReference>
<dbReference type="EMBL" id="AY495114">
    <property type="protein sequence ID" value="AAR92811.1"/>
    <property type="molecule type" value="Genomic_DNA"/>
</dbReference>
<dbReference type="EMBL" id="AY495115">
    <property type="protein sequence ID" value="AAR92824.1"/>
    <property type="molecule type" value="Genomic_DNA"/>
</dbReference>
<dbReference type="EMBL" id="AY495116">
    <property type="protein sequence ID" value="AAR92837.1"/>
    <property type="molecule type" value="Genomic_DNA"/>
</dbReference>
<dbReference type="EMBL" id="AY495117">
    <property type="protein sequence ID" value="AAR92850.1"/>
    <property type="molecule type" value="Genomic_DNA"/>
</dbReference>
<dbReference type="EMBL" id="AY495118">
    <property type="protein sequence ID" value="AAR92863.1"/>
    <property type="molecule type" value="Genomic_DNA"/>
</dbReference>
<dbReference type="EMBL" id="AY495119">
    <property type="protein sequence ID" value="AAR92876.1"/>
    <property type="molecule type" value="Genomic_DNA"/>
</dbReference>
<dbReference type="EMBL" id="AY495120">
    <property type="protein sequence ID" value="AAR92889.1"/>
    <property type="molecule type" value="Genomic_DNA"/>
</dbReference>
<dbReference type="EMBL" id="AY495121">
    <property type="protein sequence ID" value="AAR92902.1"/>
    <property type="molecule type" value="Genomic_DNA"/>
</dbReference>
<dbReference type="EMBL" id="AY495122">
    <property type="protein sequence ID" value="AAR92915.1"/>
    <property type="molecule type" value="Genomic_DNA"/>
</dbReference>
<dbReference type="EMBL" id="AY495123">
    <property type="protein sequence ID" value="AAR92928.1"/>
    <property type="molecule type" value="Genomic_DNA"/>
</dbReference>
<dbReference type="EMBL" id="AY495124">
    <property type="protein sequence ID" value="AAR92941.1"/>
    <property type="molecule type" value="Genomic_DNA"/>
</dbReference>
<dbReference type="EMBL" id="AY495125">
    <property type="protein sequence ID" value="AAR92954.1"/>
    <property type="molecule type" value="Genomic_DNA"/>
</dbReference>
<dbReference type="EMBL" id="AY495126">
    <property type="protein sequence ID" value="AAR92967.1"/>
    <property type="molecule type" value="Genomic_DNA"/>
</dbReference>
<dbReference type="EMBL" id="AY495127">
    <property type="protein sequence ID" value="AAR92980.1"/>
    <property type="molecule type" value="Genomic_DNA"/>
</dbReference>
<dbReference type="EMBL" id="AY495128">
    <property type="protein sequence ID" value="AAR92993.1"/>
    <property type="molecule type" value="Genomic_DNA"/>
</dbReference>
<dbReference type="EMBL" id="AY495129">
    <property type="protein sequence ID" value="AAR93006.1"/>
    <property type="molecule type" value="Genomic_DNA"/>
</dbReference>
<dbReference type="EMBL" id="AY495130">
    <property type="protein sequence ID" value="AAR93019.1"/>
    <property type="molecule type" value="Genomic_DNA"/>
</dbReference>
<dbReference type="EMBL" id="AY495131">
    <property type="protein sequence ID" value="AAR93032.1"/>
    <property type="molecule type" value="Genomic_DNA"/>
</dbReference>
<dbReference type="EMBL" id="AY495132">
    <property type="protein sequence ID" value="AAR93045.1"/>
    <property type="molecule type" value="Genomic_DNA"/>
</dbReference>
<dbReference type="EMBL" id="AY495133">
    <property type="protein sequence ID" value="AAR93058.1"/>
    <property type="molecule type" value="Genomic_DNA"/>
</dbReference>
<dbReference type="EMBL" id="AY495134">
    <property type="protein sequence ID" value="AAR93071.1"/>
    <property type="molecule type" value="Genomic_DNA"/>
</dbReference>
<dbReference type="EMBL" id="AY495135">
    <property type="protein sequence ID" value="AAR93084.1"/>
    <property type="molecule type" value="Genomic_DNA"/>
</dbReference>
<dbReference type="EMBL" id="AY495136">
    <property type="protein sequence ID" value="AAR93097.1"/>
    <property type="molecule type" value="Genomic_DNA"/>
</dbReference>
<dbReference type="EMBL" id="AY495137">
    <property type="protein sequence ID" value="AAR93110.1"/>
    <property type="molecule type" value="Genomic_DNA"/>
</dbReference>
<dbReference type="EMBL" id="AY495138">
    <property type="protein sequence ID" value="AAR93123.1"/>
    <property type="molecule type" value="Genomic_DNA"/>
</dbReference>
<dbReference type="EMBL" id="AY495139">
    <property type="protein sequence ID" value="AAR93136.1"/>
    <property type="molecule type" value="Genomic_DNA"/>
</dbReference>
<dbReference type="EMBL" id="AY495140">
    <property type="protein sequence ID" value="AAR93149.1"/>
    <property type="molecule type" value="Genomic_DNA"/>
</dbReference>
<dbReference type="EMBL" id="AY495141">
    <property type="protein sequence ID" value="AAR93162.1"/>
    <property type="molecule type" value="Genomic_DNA"/>
</dbReference>
<dbReference type="EMBL" id="AY495142">
    <property type="protein sequence ID" value="AAR93175.1"/>
    <property type="molecule type" value="Genomic_DNA"/>
</dbReference>
<dbReference type="EMBL" id="AY495143">
    <property type="protein sequence ID" value="AAR93188.1"/>
    <property type="molecule type" value="Genomic_DNA"/>
</dbReference>
<dbReference type="EMBL" id="AY495144">
    <property type="protein sequence ID" value="AAR93201.1"/>
    <property type="molecule type" value="Genomic_DNA"/>
</dbReference>
<dbReference type="EMBL" id="AY495145">
    <property type="protein sequence ID" value="AAR93214.1"/>
    <property type="molecule type" value="Genomic_DNA"/>
</dbReference>
<dbReference type="EMBL" id="AY495146">
    <property type="protein sequence ID" value="AAR93227.1"/>
    <property type="molecule type" value="Genomic_DNA"/>
</dbReference>
<dbReference type="EMBL" id="AY495147">
    <property type="protein sequence ID" value="AAR93240.1"/>
    <property type="molecule type" value="Genomic_DNA"/>
</dbReference>
<dbReference type="EMBL" id="AY495148">
    <property type="protein sequence ID" value="AAR93253.1"/>
    <property type="molecule type" value="Genomic_DNA"/>
</dbReference>
<dbReference type="EMBL" id="AY495149">
    <property type="protein sequence ID" value="AAR93266.1"/>
    <property type="molecule type" value="Genomic_DNA"/>
</dbReference>
<dbReference type="EMBL" id="AY495150">
    <property type="protein sequence ID" value="AAR93279.1"/>
    <property type="molecule type" value="Genomic_DNA"/>
</dbReference>
<dbReference type="EMBL" id="AY495151">
    <property type="protein sequence ID" value="AAR93292.1"/>
    <property type="molecule type" value="Genomic_DNA"/>
</dbReference>
<dbReference type="EMBL" id="AY495152">
    <property type="protein sequence ID" value="AAR93305.1"/>
    <property type="molecule type" value="Genomic_DNA"/>
</dbReference>
<dbReference type="EMBL" id="AY495153">
    <property type="protein sequence ID" value="AAR93318.1"/>
    <property type="molecule type" value="Genomic_DNA"/>
</dbReference>
<dbReference type="EMBL" id="AY495154">
    <property type="protein sequence ID" value="AAR93331.1"/>
    <property type="molecule type" value="Genomic_DNA"/>
</dbReference>
<dbReference type="EMBL" id="AY495155">
    <property type="protein sequence ID" value="AAR93344.1"/>
    <property type="molecule type" value="Genomic_DNA"/>
</dbReference>
<dbReference type="EMBL" id="AY495156">
    <property type="protein sequence ID" value="AAR93357.1"/>
    <property type="molecule type" value="Genomic_DNA"/>
</dbReference>
<dbReference type="EMBL" id="AY495157">
    <property type="protein sequence ID" value="AAR93370.1"/>
    <property type="molecule type" value="Genomic_DNA"/>
</dbReference>
<dbReference type="EMBL" id="AY495158">
    <property type="protein sequence ID" value="AAR93383.1"/>
    <property type="molecule type" value="Genomic_DNA"/>
</dbReference>
<dbReference type="EMBL" id="AY495159">
    <property type="protein sequence ID" value="AAR93396.1"/>
    <property type="molecule type" value="Genomic_DNA"/>
</dbReference>
<dbReference type="EMBL" id="AY495160">
    <property type="protein sequence ID" value="AAR93409.1"/>
    <property type="molecule type" value="Genomic_DNA"/>
</dbReference>
<dbReference type="EMBL" id="AY495161">
    <property type="protein sequence ID" value="AAR93422.1"/>
    <property type="molecule type" value="Genomic_DNA"/>
</dbReference>
<dbReference type="EMBL" id="AY495162">
    <property type="protein sequence ID" value="AAR93435.1"/>
    <property type="molecule type" value="Genomic_DNA"/>
</dbReference>
<dbReference type="EMBL" id="AY495163">
    <property type="protein sequence ID" value="AAR93448.1"/>
    <property type="molecule type" value="Genomic_DNA"/>
</dbReference>
<dbReference type="EMBL" id="AY495164">
    <property type="protein sequence ID" value="AAR93461.1"/>
    <property type="molecule type" value="Genomic_DNA"/>
</dbReference>
<dbReference type="EMBL" id="AY495166">
    <property type="protein sequence ID" value="AAR93487.1"/>
    <property type="molecule type" value="Genomic_DNA"/>
</dbReference>
<dbReference type="EMBL" id="AY495167">
    <property type="protein sequence ID" value="AAR93500.1"/>
    <property type="molecule type" value="Genomic_DNA"/>
</dbReference>
<dbReference type="EMBL" id="AY495168">
    <property type="protein sequence ID" value="AAR93513.1"/>
    <property type="molecule type" value="Genomic_DNA"/>
</dbReference>
<dbReference type="EMBL" id="AY495169">
    <property type="protein sequence ID" value="AAR93526.1"/>
    <property type="molecule type" value="Genomic_DNA"/>
</dbReference>
<dbReference type="EMBL" id="AY495170">
    <property type="protein sequence ID" value="AAR93539.1"/>
    <property type="molecule type" value="Genomic_DNA"/>
</dbReference>
<dbReference type="EMBL" id="AY495172">
    <property type="protein sequence ID" value="AAR93565.1"/>
    <property type="molecule type" value="Genomic_DNA"/>
</dbReference>
<dbReference type="EMBL" id="AY495173">
    <property type="protein sequence ID" value="AAR93578.1"/>
    <property type="molecule type" value="Genomic_DNA"/>
</dbReference>
<dbReference type="EMBL" id="AY495174">
    <property type="protein sequence ID" value="AAR93591.1"/>
    <property type="molecule type" value="Genomic_DNA"/>
</dbReference>
<dbReference type="EMBL" id="AY495175">
    <property type="protein sequence ID" value="AAR93604.1"/>
    <property type="molecule type" value="Genomic_DNA"/>
</dbReference>
<dbReference type="EMBL" id="AY495176">
    <property type="protein sequence ID" value="AAR93617.1"/>
    <property type="molecule type" value="Genomic_DNA"/>
</dbReference>
<dbReference type="EMBL" id="AY495177">
    <property type="protein sequence ID" value="AAR93630.1"/>
    <property type="molecule type" value="Genomic_DNA"/>
</dbReference>
<dbReference type="EMBL" id="AY495178">
    <property type="protein sequence ID" value="AAR93643.1"/>
    <property type="molecule type" value="Genomic_DNA"/>
</dbReference>
<dbReference type="EMBL" id="AY495179">
    <property type="protein sequence ID" value="AAR93656.1"/>
    <property type="molecule type" value="Genomic_DNA"/>
</dbReference>
<dbReference type="EMBL" id="AY495180">
    <property type="protein sequence ID" value="AAR93669.1"/>
    <property type="molecule type" value="Genomic_DNA"/>
</dbReference>
<dbReference type="EMBL" id="AY495181">
    <property type="protein sequence ID" value="AAR93682.1"/>
    <property type="molecule type" value="Genomic_DNA"/>
</dbReference>
<dbReference type="EMBL" id="AY495182">
    <property type="protein sequence ID" value="AAR93695.1"/>
    <property type="molecule type" value="Genomic_DNA"/>
</dbReference>
<dbReference type="EMBL" id="AY495183">
    <property type="protein sequence ID" value="AAR93708.1"/>
    <property type="molecule type" value="Genomic_DNA"/>
</dbReference>
<dbReference type="EMBL" id="AY495184">
    <property type="protein sequence ID" value="AAR93721.1"/>
    <property type="molecule type" value="Genomic_DNA"/>
</dbReference>
<dbReference type="EMBL" id="AY495185">
    <property type="protein sequence ID" value="AAR93734.1"/>
    <property type="molecule type" value="Genomic_DNA"/>
</dbReference>
<dbReference type="EMBL" id="AY495186">
    <property type="protein sequence ID" value="AAR93747.1"/>
    <property type="molecule type" value="Genomic_DNA"/>
</dbReference>
<dbReference type="EMBL" id="AY495187">
    <property type="protein sequence ID" value="AAR93760.1"/>
    <property type="molecule type" value="Genomic_DNA"/>
</dbReference>
<dbReference type="EMBL" id="AY495188">
    <property type="protein sequence ID" value="AAR93773.1"/>
    <property type="molecule type" value="Genomic_DNA"/>
</dbReference>
<dbReference type="EMBL" id="AY495189">
    <property type="protein sequence ID" value="AAR93786.1"/>
    <property type="molecule type" value="Genomic_DNA"/>
</dbReference>
<dbReference type="EMBL" id="AY495190">
    <property type="protein sequence ID" value="AAR93799.1"/>
    <property type="molecule type" value="Genomic_DNA"/>
</dbReference>
<dbReference type="EMBL" id="AY495191">
    <property type="protein sequence ID" value="AAR93812.1"/>
    <property type="molecule type" value="Genomic_DNA"/>
</dbReference>
<dbReference type="EMBL" id="AY495192">
    <property type="protein sequence ID" value="AAR93825.1"/>
    <property type="molecule type" value="Genomic_DNA"/>
</dbReference>
<dbReference type="EMBL" id="AY495193">
    <property type="protein sequence ID" value="AAR93838.1"/>
    <property type="molecule type" value="Genomic_DNA"/>
</dbReference>
<dbReference type="EMBL" id="AY495194">
    <property type="protein sequence ID" value="AAR93851.1"/>
    <property type="molecule type" value="Genomic_DNA"/>
</dbReference>
<dbReference type="EMBL" id="AY495195">
    <property type="protein sequence ID" value="AAR93864.1"/>
    <property type="molecule type" value="Genomic_DNA"/>
</dbReference>
<dbReference type="EMBL" id="AY495196">
    <property type="protein sequence ID" value="AAR93877.1"/>
    <property type="molecule type" value="Genomic_DNA"/>
</dbReference>
<dbReference type="EMBL" id="AY495197">
    <property type="protein sequence ID" value="AAR93890.1"/>
    <property type="molecule type" value="Genomic_DNA"/>
</dbReference>
<dbReference type="EMBL" id="AY495198">
    <property type="protein sequence ID" value="AAR93903.1"/>
    <property type="molecule type" value="Genomic_DNA"/>
</dbReference>
<dbReference type="EMBL" id="AY495199">
    <property type="protein sequence ID" value="AAR93916.1"/>
    <property type="molecule type" value="Genomic_DNA"/>
</dbReference>
<dbReference type="EMBL" id="AY495200">
    <property type="protein sequence ID" value="AAR93929.1"/>
    <property type="molecule type" value="Genomic_DNA"/>
</dbReference>
<dbReference type="EMBL" id="AY495201">
    <property type="protein sequence ID" value="AAR93942.1"/>
    <property type="molecule type" value="Genomic_DNA"/>
</dbReference>
<dbReference type="EMBL" id="AY495202">
    <property type="protein sequence ID" value="AAR93955.1"/>
    <property type="molecule type" value="Genomic_DNA"/>
</dbReference>
<dbReference type="EMBL" id="AY495203">
    <property type="protein sequence ID" value="AAR93968.1"/>
    <property type="molecule type" value="Genomic_DNA"/>
</dbReference>
<dbReference type="EMBL" id="AY495204">
    <property type="protein sequence ID" value="AAR93981.1"/>
    <property type="molecule type" value="Genomic_DNA"/>
</dbReference>
<dbReference type="EMBL" id="AY495205">
    <property type="protein sequence ID" value="AAR93994.1"/>
    <property type="molecule type" value="Genomic_DNA"/>
</dbReference>
<dbReference type="EMBL" id="AY495206">
    <property type="protein sequence ID" value="AAR94007.1"/>
    <property type="molecule type" value="Genomic_DNA"/>
</dbReference>
<dbReference type="EMBL" id="AY495207">
    <property type="protein sequence ID" value="AAR94020.1"/>
    <property type="molecule type" value="Genomic_DNA"/>
</dbReference>
<dbReference type="EMBL" id="AY495208">
    <property type="protein sequence ID" value="AAR94033.1"/>
    <property type="molecule type" value="Genomic_DNA"/>
</dbReference>
<dbReference type="EMBL" id="AY495209">
    <property type="protein sequence ID" value="AAR94046.1"/>
    <property type="molecule type" value="Genomic_DNA"/>
</dbReference>
<dbReference type="EMBL" id="AY495210">
    <property type="protein sequence ID" value="AAR94059.1"/>
    <property type="molecule type" value="Genomic_DNA"/>
</dbReference>
<dbReference type="EMBL" id="AY495211">
    <property type="protein sequence ID" value="AAR94072.1"/>
    <property type="molecule type" value="Genomic_DNA"/>
</dbReference>
<dbReference type="EMBL" id="AY495212">
    <property type="protein sequence ID" value="AAR94085.1"/>
    <property type="molecule type" value="Genomic_DNA"/>
</dbReference>
<dbReference type="EMBL" id="AY495213">
    <property type="protein sequence ID" value="AAR94098.1"/>
    <property type="molecule type" value="Genomic_DNA"/>
</dbReference>
<dbReference type="EMBL" id="AY495214">
    <property type="protein sequence ID" value="AAR94111.1"/>
    <property type="molecule type" value="Genomic_DNA"/>
</dbReference>
<dbReference type="EMBL" id="AY495215">
    <property type="protein sequence ID" value="AAR94124.1"/>
    <property type="molecule type" value="Genomic_DNA"/>
</dbReference>
<dbReference type="EMBL" id="AY495216">
    <property type="protein sequence ID" value="AAR94137.1"/>
    <property type="molecule type" value="Genomic_DNA"/>
</dbReference>
<dbReference type="EMBL" id="AY495217">
    <property type="protein sequence ID" value="AAR94150.1"/>
    <property type="molecule type" value="Genomic_DNA"/>
</dbReference>
<dbReference type="EMBL" id="AY495218">
    <property type="protein sequence ID" value="AAR94163.1"/>
    <property type="molecule type" value="Genomic_DNA"/>
</dbReference>
<dbReference type="EMBL" id="AY495219">
    <property type="protein sequence ID" value="AAR94176.1"/>
    <property type="molecule type" value="Genomic_DNA"/>
</dbReference>
<dbReference type="EMBL" id="AY495220">
    <property type="protein sequence ID" value="AAR94189.1"/>
    <property type="molecule type" value="Genomic_DNA"/>
</dbReference>
<dbReference type="EMBL" id="AY495221">
    <property type="protein sequence ID" value="AAR94202.1"/>
    <property type="molecule type" value="Genomic_DNA"/>
</dbReference>
<dbReference type="EMBL" id="AY495223">
    <property type="protein sequence ID" value="AAR94228.1"/>
    <property type="molecule type" value="Genomic_DNA"/>
</dbReference>
<dbReference type="EMBL" id="AY495224">
    <property type="protein sequence ID" value="AAR94241.1"/>
    <property type="molecule type" value="Genomic_DNA"/>
</dbReference>
<dbReference type="EMBL" id="AY495225">
    <property type="protein sequence ID" value="AAR94254.1"/>
    <property type="molecule type" value="Genomic_DNA"/>
</dbReference>
<dbReference type="EMBL" id="AY495226">
    <property type="protein sequence ID" value="AAR94267.1"/>
    <property type="molecule type" value="Genomic_DNA"/>
</dbReference>
<dbReference type="EMBL" id="AY495227">
    <property type="protein sequence ID" value="AAR94280.1"/>
    <property type="molecule type" value="Genomic_DNA"/>
</dbReference>
<dbReference type="EMBL" id="AY495228">
    <property type="protein sequence ID" value="AAR94293.1"/>
    <property type="molecule type" value="Genomic_DNA"/>
</dbReference>
<dbReference type="EMBL" id="AY495229">
    <property type="protein sequence ID" value="AAR94306.1"/>
    <property type="molecule type" value="Genomic_DNA"/>
</dbReference>
<dbReference type="EMBL" id="AY495230">
    <property type="protein sequence ID" value="AAR94319.1"/>
    <property type="molecule type" value="Genomic_DNA"/>
</dbReference>
<dbReference type="EMBL" id="AY495231">
    <property type="protein sequence ID" value="AAR94332.1"/>
    <property type="molecule type" value="Genomic_DNA"/>
</dbReference>
<dbReference type="EMBL" id="AY495232">
    <property type="protein sequence ID" value="AAR94345.1"/>
    <property type="molecule type" value="Genomic_DNA"/>
</dbReference>
<dbReference type="EMBL" id="AY495233">
    <property type="protein sequence ID" value="AAR94358.1"/>
    <property type="molecule type" value="Genomic_DNA"/>
</dbReference>
<dbReference type="EMBL" id="AY495234">
    <property type="protein sequence ID" value="AAR94371.1"/>
    <property type="molecule type" value="Genomic_DNA"/>
</dbReference>
<dbReference type="EMBL" id="AY495235">
    <property type="protein sequence ID" value="AAR94384.1"/>
    <property type="molecule type" value="Genomic_DNA"/>
</dbReference>
<dbReference type="EMBL" id="AY495236">
    <property type="protein sequence ID" value="AAR94397.1"/>
    <property type="molecule type" value="Genomic_DNA"/>
</dbReference>
<dbReference type="EMBL" id="AY495237">
    <property type="protein sequence ID" value="AAR94410.1"/>
    <property type="molecule type" value="Genomic_DNA"/>
</dbReference>
<dbReference type="EMBL" id="AY495238">
    <property type="protein sequence ID" value="AAR94423.1"/>
    <property type="molecule type" value="Genomic_DNA"/>
</dbReference>
<dbReference type="EMBL" id="AY495239">
    <property type="protein sequence ID" value="AAR94436.1"/>
    <property type="molecule type" value="Genomic_DNA"/>
</dbReference>
<dbReference type="EMBL" id="AY495240">
    <property type="protein sequence ID" value="AAR94449.1"/>
    <property type="molecule type" value="Genomic_DNA"/>
</dbReference>
<dbReference type="EMBL" id="AY495241">
    <property type="protein sequence ID" value="AAR94462.1"/>
    <property type="molecule type" value="Genomic_DNA"/>
</dbReference>
<dbReference type="EMBL" id="AY495242">
    <property type="protein sequence ID" value="AAR94475.1"/>
    <property type="molecule type" value="Genomic_DNA"/>
</dbReference>
<dbReference type="EMBL" id="AY495243">
    <property type="protein sequence ID" value="AAR94488.1"/>
    <property type="molecule type" value="Genomic_DNA"/>
</dbReference>
<dbReference type="EMBL" id="AY495244">
    <property type="protein sequence ID" value="AAR94501.1"/>
    <property type="molecule type" value="Genomic_DNA"/>
</dbReference>
<dbReference type="EMBL" id="AY495245">
    <property type="protein sequence ID" value="AAR94514.1"/>
    <property type="molecule type" value="Genomic_DNA"/>
</dbReference>
<dbReference type="EMBL" id="AY495246">
    <property type="protein sequence ID" value="AAR94527.1"/>
    <property type="molecule type" value="Genomic_DNA"/>
</dbReference>
<dbReference type="EMBL" id="AY495247">
    <property type="protein sequence ID" value="AAR94540.1"/>
    <property type="molecule type" value="Genomic_DNA"/>
</dbReference>
<dbReference type="EMBL" id="AY495248">
    <property type="protein sequence ID" value="AAR94553.1"/>
    <property type="molecule type" value="Genomic_DNA"/>
</dbReference>
<dbReference type="EMBL" id="AY495249">
    <property type="protein sequence ID" value="AAR94566.1"/>
    <property type="molecule type" value="Genomic_DNA"/>
</dbReference>
<dbReference type="EMBL" id="AY495250">
    <property type="protein sequence ID" value="AAR94579.1"/>
    <property type="molecule type" value="Genomic_DNA"/>
</dbReference>
<dbReference type="EMBL" id="AY495251">
    <property type="protein sequence ID" value="AAR94592.1"/>
    <property type="molecule type" value="Genomic_DNA"/>
</dbReference>
<dbReference type="EMBL" id="AY495252">
    <property type="protein sequence ID" value="AAR94605.1"/>
    <property type="molecule type" value="Genomic_DNA"/>
</dbReference>
<dbReference type="EMBL" id="AY495253">
    <property type="protein sequence ID" value="AAR94618.1"/>
    <property type="molecule type" value="Genomic_DNA"/>
</dbReference>
<dbReference type="EMBL" id="AY495254">
    <property type="protein sequence ID" value="AAR94631.1"/>
    <property type="molecule type" value="Genomic_DNA"/>
</dbReference>
<dbReference type="EMBL" id="AY495255">
    <property type="protein sequence ID" value="AAR94644.1"/>
    <property type="molecule type" value="Genomic_DNA"/>
</dbReference>
<dbReference type="EMBL" id="AY495256">
    <property type="protein sequence ID" value="AAR94657.1"/>
    <property type="molecule type" value="Genomic_DNA"/>
</dbReference>
<dbReference type="EMBL" id="AY495257">
    <property type="protein sequence ID" value="AAR94670.1"/>
    <property type="molecule type" value="Genomic_DNA"/>
</dbReference>
<dbReference type="EMBL" id="AY495258">
    <property type="protein sequence ID" value="AAR94683.1"/>
    <property type="molecule type" value="Genomic_DNA"/>
</dbReference>
<dbReference type="EMBL" id="AY495259">
    <property type="protein sequence ID" value="AAR94696.1"/>
    <property type="molecule type" value="Genomic_DNA"/>
</dbReference>
<dbReference type="EMBL" id="AY495260">
    <property type="protein sequence ID" value="AAR94709.1"/>
    <property type="molecule type" value="Genomic_DNA"/>
</dbReference>
<dbReference type="EMBL" id="AY495261">
    <property type="protein sequence ID" value="AAR94722.1"/>
    <property type="molecule type" value="Genomic_DNA"/>
</dbReference>
<dbReference type="EMBL" id="AY495262">
    <property type="protein sequence ID" value="AAR94735.1"/>
    <property type="molecule type" value="Genomic_DNA"/>
</dbReference>
<dbReference type="EMBL" id="AY495263">
    <property type="protein sequence ID" value="AAR94748.1"/>
    <property type="molecule type" value="Genomic_DNA"/>
</dbReference>
<dbReference type="EMBL" id="AY495264">
    <property type="protein sequence ID" value="AAR94761.1"/>
    <property type="molecule type" value="Genomic_DNA"/>
</dbReference>
<dbReference type="EMBL" id="AY495265">
    <property type="protein sequence ID" value="AAR94774.1"/>
    <property type="molecule type" value="Genomic_DNA"/>
</dbReference>
<dbReference type="EMBL" id="AY495266">
    <property type="protein sequence ID" value="AAR94787.1"/>
    <property type="molecule type" value="Genomic_DNA"/>
</dbReference>
<dbReference type="EMBL" id="AY495267">
    <property type="protein sequence ID" value="AAR94800.1"/>
    <property type="molecule type" value="Genomic_DNA"/>
</dbReference>
<dbReference type="EMBL" id="AY495268">
    <property type="protein sequence ID" value="AAR94813.1"/>
    <property type="molecule type" value="Genomic_DNA"/>
</dbReference>
<dbReference type="EMBL" id="AY495269">
    <property type="protein sequence ID" value="AAR94826.1"/>
    <property type="molecule type" value="Genomic_DNA"/>
</dbReference>
<dbReference type="EMBL" id="AY495270">
    <property type="protein sequence ID" value="AAR94839.1"/>
    <property type="molecule type" value="Genomic_DNA"/>
</dbReference>
<dbReference type="EMBL" id="AY495271">
    <property type="protein sequence ID" value="AAR94852.1"/>
    <property type="molecule type" value="Genomic_DNA"/>
</dbReference>
<dbReference type="EMBL" id="AY495272">
    <property type="protein sequence ID" value="AAR94865.1"/>
    <property type="molecule type" value="Genomic_DNA"/>
</dbReference>
<dbReference type="EMBL" id="AY495273">
    <property type="protein sequence ID" value="AAR94878.1"/>
    <property type="molecule type" value="Genomic_DNA"/>
</dbReference>
<dbReference type="EMBL" id="AY495274">
    <property type="protein sequence ID" value="AAR94891.1"/>
    <property type="molecule type" value="Genomic_DNA"/>
</dbReference>
<dbReference type="EMBL" id="AY495275">
    <property type="protein sequence ID" value="AAR94904.1"/>
    <property type="molecule type" value="Genomic_DNA"/>
</dbReference>
<dbReference type="EMBL" id="AY495276">
    <property type="protein sequence ID" value="AAR94917.1"/>
    <property type="molecule type" value="Genomic_DNA"/>
</dbReference>
<dbReference type="EMBL" id="AY495277">
    <property type="protein sequence ID" value="AAR94930.1"/>
    <property type="molecule type" value="Genomic_DNA"/>
</dbReference>
<dbReference type="EMBL" id="AY495278">
    <property type="protein sequence ID" value="AAR94943.1"/>
    <property type="molecule type" value="Genomic_DNA"/>
</dbReference>
<dbReference type="EMBL" id="AY495279">
    <property type="protein sequence ID" value="AAR94956.1"/>
    <property type="molecule type" value="Genomic_DNA"/>
</dbReference>
<dbReference type="EMBL" id="AY495280">
    <property type="protein sequence ID" value="AAR94969.1"/>
    <property type="molecule type" value="Genomic_DNA"/>
</dbReference>
<dbReference type="EMBL" id="AY495281">
    <property type="protein sequence ID" value="AAR94982.1"/>
    <property type="molecule type" value="Genomic_DNA"/>
</dbReference>
<dbReference type="EMBL" id="AY495282">
    <property type="protein sequence ID" value="AAR94995.1"/>
    <property type="molecule type" value="Genomic_DNA"/>
</dbReference>
<dbReference type="EMBL" id="AY495283">
    <property type="protein sequence ID" value="AAR95008.1"/>
    <property type="molecule type" value="Genomic_DNA"/>
</dbReference>
<dbReference type="EMBL" id="AY495284">
    <property type="protein sequence ID" value="AAR95021.1"/>
    <property type="molecule type" value="Genomic_DNA"/>
</dbReference>
<dbReference type="EMBL" id="AY495285">
    <property type="protein sequence ID" value="AAR95034.1"/>
    <property type="molecule type" value="Genomic_DNA"/>
</dbReference>
<dbReference type="EMBL" id="AY495286">
    <property type="protein sequence ID" value="AAR95047.1"/>
    <property type="molecule type" value="Genomic_DNA"/>
</dbReference>
<dbReference type="EMBL" id="AY495287">
    <property type="protein sequence ID" value="AAR95060.1"/>
    <property type="molecule type" value="Genomic_DNA"/>
</dbReference>
<dbReference type="EMBL" id="AY495288">
    <property type="protein sequence ID" value="AAR95073.1"/>
    <property type="molecule type" value="Genomic_DNA"/>
</dbReference>
<dbReference type="EMBL" id="AY495289">
    <property type="protein sequence ID" value="AAR95086.1"/>
    <property type="molecule type" value="Genomic_DNA"/>
</dbReference>
<dbReference type="EMBL" id="AY495290">
    <property type="protein sequence ID" value="AAR95099.1"/>
    <property type="molecule type" value="Genomic_DNA"/>
</dbReference>
<dbReference type="EMBL" id="AY495291">
    <property type="protein sequence ID" value="AAR95112.1"/>
    <property type="molecule type" value="Genomic_DNA"/>
</dbReference>
<dbReference type="EMBL" id="AY495292">
    <property type="protein sequence ID" value="AAR95125.1"/>
    <property type="molecule type" value="Genomic_DNA"/>
</dbReference>
<dbReference type="EMBL" id="AY495293">
    <property type="protein sequence ID" value="AAR95138.1"/>
    <property type="molecule type" value="Genomic_DNA"/>
</dbReference>
<dbReference type="EMBL" id="AY495294">
    <property type="protein sequence ID" value="AAR95151.1"/>
    <property type="molecule type" value="Genomic_DNA"/>
</dbReference>
<dbReference type="EMBL" id="AY495295">
    <property type="protein sequence ID" value="AAR95164.1"/>
    <property type="molecule type" value="Genomic_DNA"/>
</dbReference>
<dbReference type="EMBL" id="AY495296">
    <property type="protein sequence ID" value="AAR95177.1"/>
    <property type="molecule type" value="Genomic_DNA"/>
</dbReference>
<dbReference type="EMBL" id="AY495297">
    <property type="protein sequence ID" value="AAR95190.1"/>
    <property type="molecule type" value="Genomic_DNA"/>
</dbReference>
<dbReference type="EMBL" id="AY495298">
    <property type="protein sequence ID" value="AAR95203.1"/>
    <property type="molecule type" value="Genomic_DNA"/>
</dbReference>
<dbReference type="EMBL" id="AY495299">
    <property type="protein sequence ID" value="AAR95216.1"/>
    <property type="molecule type" value="Genomic_DNA"/>
</dbReference>
<dbReference type="EMBL" id="AY495300">
    <property type="protein sequence ID" value="AAR95229.1"/>
    <property type="molecule type" value="Genomic_DNA"/>
</dbReference>
<dbReference type="EMBL" id="AY495301">
    <property type="protein sequence ID" value="AAR95242.1"/>
    <property type="molecule type" value="Genomic_DNA"/>
</dbReference>
<dbReference type="EMBL" id="AY495302">
    <property type="protein sequence ID" value="AAR95255.1"/>
    <property type="molecule type" value="Genomic_DNA"/>
</dbReference>
<dbReference type="EMBL" id="AY495303">
    <property type="protein sequence ID" value="AAR95268.1"/>
    <property type="molecule type" value="Genomic_DNA"/>
</dbReference>
<dbReference type="EMBL" id="AY495304">
    <property type="protein sequence ID" value="AAR95281.1"/>
    <property type="molecule type" value="Genomic_DNA"/>
</dbReference>
<dbReference type="EMBL" id="AY495305">
    <property type="protein sequence ID" value="AAR95294.1"/>
    <property type="molecule type" value="Genomic_DNA"/>
</dbReference>
<dbReference type="EMBL" id="AY495306">
    <property type="protein sequence ID" value="AAR95307.1"/>
    <property type="molecule type" value="Genomic_DNA"/>
</dbReference>
<dbReference type="EMBL" id="AY495307">
    <property type="protein sequence ID" value="AAR95320.1"/>
    <property type="molecule type" value="Genomic_DNA"/>
</dbReference>
<dbReference type="EMBL" id="AY495308">
    <property type="protein sequence ID" value="AAR95333.1"/>
    <property type="molecule type" value="Genomic_DNA"/>
</dbReference>
<dbReference type="EMBL" id="AY495309">
    <property type="protein sequence ID" value="AAR95346.1"/>
    <property type="molecule type" value="Genomic_DNA"/>
</dbReference>
<dbReference type="EMBL" id="AY495310">
    <property type="protein sequence ID" value="AAR95359.1"/>
    <property type="molecule type" value="Genomic_DNA"/>
</dbReference>
<dbReference type="EMBL" id="AY495311">
    <property type="protein sequence ID" value="AAR95372.1"/>
    <property type="molecule type" value="Genomic_DNA"/>
</dbReference>
<dbReference type="EMBL" id="AY495312">
    <property type="protein sequence ID" value="AAR95385.1"/>
    <property type="molecule type" value="Genomic_DNA"/>
</dbReference>
<dbReference type="EMBL" id="AY495313">
    <property type="protein sequence ID" value="AAR95398.1"/>
    <property type="molecule type" value="Genomic_DNA"/>
</dbReference>
<dbReference type="EMBL" id="AY495314">
    <property type="protein sequence ID" value="AAR95411.1"/>
    <property type="molecule type" value="Genomic_DNA"/>
</dbReference>
<dbReference type="EMBL" id="AY495315">
    <property type="protein sequence ID" value="AAR95424.1"/>
    <property type="molecule type" value="Genomic_DNA"/>
</dbReference>
<dbReference type="EMBL" id="AY495316">
    <property type="protein sequence ID" value="AAR95437.1"/>
    <property type="molecule type" value="Genomic_DNA"/>
</dbReference>
<dbReference type="EMBL" id="AY495317">
    <property type="protein sequence ID" value="AAR95450.1"/>
    <property type="molecule type" value="Genomic_DNA"/>
</dbReference>
<dbReference type="EMBL" id="AY495318">
    <property type="protein sequence ID" value="AAR95463.1"/>
    <property type="molecule type" value="Genomic_DNA"/>
</dbReference>
<dbReference type="EMBL" id="AY495319">
    <property type="protein sequence ID" value="AAR95476.1"/>
    <property type="molecule type" value="Genomic_DNA"/>
</dbReference>
<dbReference type="EMBL" id="AY495320">
    <property type="protein sequence ID" value="AAR95489.1"/>
    <property type="molecule type" value="Genomic_DNA"/>
</dbReference>
<dbReference type="EMBL" id="AY495321">
    <property type="protein sequence ID" value="AAR95502.1"/>
    <property type="molecule type" value="Genomic_DNA"/>
</dbReference>
<dbReference type="EMBL" id="AY495322">
    <property type="protein sequence ID" value="AAR95515.1"/>
    <property type="molecule type" value="Genomic_DNA"/>
</dbReference>
<dbReference type="EMBL" id="AY495323">
    <property type="protein sequence ID" value="AAR95528.1"/>
    <property type="molecule type" value="Genomic_DNA"/>
</dbReference>
<dbReference type="EMBL" id="AY495325">
    <property type="protein sequence ID" value="AAR95554.1"/>
    <property type="molecule type" value="Genomic_DNA"/>
</dbReference>
<dbReference type="EMBL" id="AY495326">
    <property type="protein sequence ID" value="AAR95567.1"/>
    <property type="molecule type" value="Genomic_DNA"/>
</dbReference>
<dbReference type="EMBL" id="AY495327">
    <property type="protein sequence ID" value="AAR95580.1"/>
    <property type="molecule type" value="Genomic_DNA"/>
</dbReference>
<dbReference type="EMBL" id="AY495328">
    <property type="protein sequence ID" value="AAR95593.1"/>
    <property type="molecule type" value="Genomic_DNA"/>
</dbReference>
<dbReference type="EMBL" id="AY495329">
    <property type="protein sequence ID" value="AAR95606.1"/>
    <property type="molecule type" value="Genomic_DNA"/>
</dbReference>
<dbReference type="EMBL" id="AY495330">
    <property type="protein sequence ID" value="AAR95619.1"/>
    <property type="molecule type" value="Genomic_DNA"/>
</dbReference>
<dbReference type="EMBL" id="X55654">
    <property type="protein sequence ID" value="CAA39187.1"/>
    <property type="molecule type" value="mRNA"/>
</dbReference>
<dbReference type="PIR" id="A00472">
    <property type="entry name" value="OBHU2"/>
</dbReference>
<dbReference type="RefSeq" id="YP_003024029.1">
    <property type="nucleotide sequence ID" value="NC_012920.1"/>
</dbReference>
<dbReference type="PDB" id="3VRJ">
    <property type="method" value="X-ray"/>
    <property type="resolution" value="1.90 A"/>
    <property type="chains" value="C=46-55"/>
</dbReference>
<dbReference type="PDB" id="5Z62">
    <property type="method" value="EM"/>
    <property type="resolution" value="3.60 A"/>
    <property type="chains" value="B=1-227"/>
</dbReference>
<dbReference type="PDBsum" id="3VRJ"/>
<dbReference type="PDBsum" id="5Z62"/>
<dbReference type="SMR" id="P00403"/>
<dbReference type="BioGRID" id="110616">
    <property type="interactions" value="211"/>
</dbReference>
<dbReference type="ComplexPortal" id="CPX-6123">
    <property type="entry name" value="Mitochondrial respiratory chain complex IV"/>
</dbReference>
<dbReference type="CORUM" id="P00403"/>
<dbReference type="FunCoup" id="P00403">
    <property type="interactions" value="226"/>
</dbReference>
<dbReference type="IntAct" id="P00403">
    <property type="interactions" value="85"/>
</dbReference>
<dbReference type="MINT" id="P00403"/>
<dbReference type="STRING" id="9606.ENSP00000354876"/>
<dbReference type="BindingDB" id="P00403"/>
<dbReference type="ChEMBL" id="CHEMBL6174"/>
<dbReference type="DrugBank" id="DB02659">
    <property type="generic name" value="Cholic Acid"/>
</dbReference>
<dbReference type="DrugBank" id="DB04464">
    <property type="generic name" value="N-Formylmethionine"/>
</dbReference>
<dbReference type="DrugBank" id="DB05412">
    <property type="generic name" value="Talmapimod"/>
</dbReference>
<dbReference type="DrugCentral" id="P00403"/>
<dbReference type="TCDB" id="3.D.4.11.1">
    <property type="family name" value="the proton-translocating cytochrome oxidase (cox) superfamily"/>
</dbReference>
<dbReference type="GlyGen" id="P00403">
    <property type="glycosylation" value="1 site, 1 O-linked glycan (1 site)"/>
</dbReference>
<dbReference type="iPTMnet" id="P00403"/>
<dbReference type="MetOSite" id="P00403"/>
<dbReference type="PhosphoSitePlus" id="P00403"/>
<dbReference type="SwissPalm" id="P00403"/>
<dbReference type="BioMuta" id="MT-CO2"/>
<dbReference type="DMDM" id="117020"/>
<dbReference type="jPOST" id="P00403"/>
<dbReference type="MassIVE" id="P00403"/>
<dbReference type="PaxDb" id="9606-ENSP00000354876"/>
<dbReference type="PeptideAtlas" id="P00403"/>
<dbReference type="PRIDE" id="P00403"/>
<dbReference type="ProteomicsDB" id="51247"/>
<dbReference type="Pumba" id="P00403"/>
<dbReference type="TopDownProteomics" id="P00403"/>
<dbReference type="Antibodypedia" id="4262">
    <property type="antibodies" value="233 antibodies from 33 providers"/>
</dbReference>
<dbReference type="DNASU" id="4513"/>
<dbReference type="Ensembl" id="ENST00000361739.1">
    <property type="protein sequence ID" value="ENSP00000354876.1"/>
    <property type="gene ID" value="ENSG00000198712.1"/>
</dbReference>
<dbReference type="GeneID" id="4513"/>
<dbReference type="KEGG" id="hsa:4513"/>
<dbReference type="AGR" id="HGNC:52028"/>
<dbReference type="AGR" id="HGNC:7421"/>
<dbReference type="CTD" id="4513"/>
<dbReference type="DisGeNET" id="4513"/>
<dbReference type="GeneCards" id="MT-CO2"/>
<dbReference type="GeneReviews" id="MT-CO2"/>
<dbReference type="HGNC" id="HGNC:7421">
    <property type="gene designation" value="MT-CO2"/>
</dbReference>
<dbReference type="HPA" id="ENSG00000198712">
    <property type="expression patterns" value="Tissue enhanced (heart)"/>
</dbReference>
<dbReference type="MalaCards" id="MT-CO2"/>
<dbReference type="MIM" id="220110">
    <property type="type" value="phenotype"/>
</dbReference>
<dbReference type="MIM" id="516040">
    <property type="type" value="gene"/>
</dbReference>
<dbReference type="neXtProt" id="NX_P00403"/>
<dbReference type="OpenTargets" id="ENSG00000198712"/>
<dbReference type="Orphanet" id="254905">
    <property type="disease" value="Isolated cytochrome C oxidase deficiency"/>
</dbReference>
<dbReference type="Orphanet" id="550">
    <property type="disease" value="MELAS"/>
</dbReference>
<dbReference type="PharmGKB" id="PA31227"/>
<dbReference type="VEuPathDB" id="HostDB:ENSG00000198712"/>
<dbReference type="eggNOG" id="KOG4767">
    <property type="taxonomic scope" value="Eukaryota"/>
</dbReference>
<dbReference type="GeneTree" id="ENSGT00390000017410"/>
<dbReference type="HOGENOM" id="CLU_036876_2_3_1"/>
<dbReference type="InParanoid" id="P00403"/>
<dbReference type="OMA" id="WSYEYTD"/>
<dbReference type="PAN-GO" id="P00403">
    <property type="GO annotations" value="2 GO annotations based on evolutionary models"/>
</dbReference>
<dbReference type="PhylomeDB" id="P00403"/>
<dbReference type="TreeFam" id="TF344269"/>
<dbReference type="BioCyc" id="MetaCyc:HS00027-MONOMER"/>
<dbReference type="PathwayCommons" id="P00403"/>
<dbReference type="Reactome" id="R-HSA-5628897">
    <property type="pathway name" value="TP53 Regulates Metabolic Genes"/>
</dbReference>
<dbReference type="Reactome" id="R-HSA-611105">
    <property type="pathway name" value="Respiratory electron transport"/>
</dbReference>
<dbReference type="Reactome" id="R-HSA-9707564">
    <property type="pathway name" value="Cytoprotection by HMOX1"/>
</dbReference>
<dbReference type="Reactome" id="R-HSA-9837999">
    <property type="pathway name" value="Mitochondrial protein degradation"/>
</dbReference>
<dbReference type="Reactome" id="R-HSA-9864848">
    <property type="pathway name" value="Complex IV assembly"/>
</dbReference>
<dbReference type="SignaLink" id="P00403"/>
<dbReference type="SIGNOR" id="P00403"/>
<dbReference type="BioGRID-ORCS" id="4513">
    <property type="hits" value="0 hits in 2 CRISPR screens"/>
</dbReference>
<dbReference type="CD-CODE" id="91857CE7">
    <property type="entry name" value="Nucleolus"/>
</dbReference>
<dbReference type="CD-CODE" id="FB4E32DD">
    <property type="entry name" value="Presynaptic clusters and postsynaptic densities"/>
</dbReference>
<dbReference type="ChiTaRS" id="MT-CO2">
    <property type="organism name" value="human"/>
</dbReference>
<dbReference type="EvolutionaryTrace" id="P00403"/>
<dbReference type="GeneWiki" id="MT-CO2"/>
<dbReference type="GenomeRNAi" id="4513"/>
<dbReference type="Pharos" id="P00403">
    <property type="development level" value="Tchem"/>
</dbReference>
<dbReference type="PRO" id="PR:P00403"/>
<dbReference type="Proteomes" id="UP000005640">
    <property type="component" value="Mitochondrion MT"/>
</dbReference>
<dbReference type="RNAct" id="P00403">
    <property type="molecule type" value="protein"/>
</dbReference>
<dbReference type="Bgee" id="ENSG00000198712">
    <property type="expression patterns" value="Expressed in metanephros cortex and 95 other cell types or tissues"/>
</dbReference>
<dbReference type="ExpressionAtlas" id="P00403">
    <property type="expression patterns" value="baseline and differential"/>
</dbReference>
<dbReference type="GO" id="GO:0016020">
    <property type="term" value="C:membrane"/>
    <property type="evidence" value="ECO:0007005"/>
    <property type="project" value="UniProtKB"/>
</dbReference>
<dbReference type="GO" id="GO:0005743">
    <property type="term" value="C:mitochondrial inner membrane"/>
    <property type="evidence" value="ECO:0000314"/>
    <property type="project" value="CAFA"/>
</dbReference>
<dbReference type="GO" id="GO:0005759">
    <property type="term" value="C:mitochondrial matrix"/>
    <property type="evidence" value="ECO:0000304"/>
    <property type="project" value="Reactome"/>
</dbReference>
<dbReference type="GO" id="GO:0031966">
    <property type="term" value="C:mitochondrial membrane"/>
    <property type="evidence" value="ECO:0000314"/>
    <property type="project" value="ComplexPortal"/>
</dbReference>
<dbReference type="GO" id="GO:0005739">
    <property type="term" value="C:mitochondrion"/>
    <property type="evidence" value="ECO:0000314"/>
    <property type="project" value="UniProtKB"/>
</dbReference>
<dbReference type="GO" id="GO:0045277">
    <property type="term" value="C:respiratory chain complex IV"/>
    <property type="evidence" value="ECO:0000314"/>
    <property type="project" value="UniProtKB"/>
</dbReference>
<dbReference type="GO" id="GO:0005507">
    <property type="term" value="F:copper ion binding"/>
    <property type="evidence" value="ECO:0007669"/>
    <property type="project" value="InterPro"/>
</dbReference>
<dbReference type="GO" id="GO:0004129">
    <property type="term" value="F:cytochrome-c oxidase activity"/>
    <property type="evidence" value="ECO:0000303"/>
    <property type="project" value="UniProtKB"/>
</dbReference>
<dbReference type="GO" id="GO:0042773">
    <property type="term" value="P:ATP synthesis coupled electron transport"/>
    <property type="evidence" value="ECO:0000318"/>
    <property type="project" value="GO_Central"/>
</dbReference>
<dbReference type="GO" id="GO:0045333">
    <property type="term" value="P:cellular respiration"/>
    <property type="evidence" value="ECO:0000303"/>
    <property type="project" value="ComplexPortal"/>
</dbReference>
<dbReference type="GO" id="GO:0007595">
    <property type="term" value="P:lactation"/>
    <property type="evidence" value="ECO:0007669"/>
    <property type="project" value="Ensembl"/>
</dbReference>
<dbReference type="GO" id="GO:0006123">
    <property type="term" value="P:mitochondrial electron transport, cytochrome c to oxygen"/>
    <property type="evidence" value="ECO:0000250"/>
    <property type="project" value="FlyBase"/>
</dbReference>
<dbReference type="GO" id="GO:0001666">
    <property type="term" value="P:response to hypoxia"/>
    <property type="evidence" value="ECO:0007669"/>
    <property type="project" value="Ensembl"/>
</dbReference>
<dbReference type="CDD" id="cd13912">
    <property type="entry name" value="CcO_II_C"/>
    <property type="match status" value="1"/>
</dbReference>
<dbReference type="FunFam" id="1.10.287.90:FF:000001">
    <property type="entry name" value="Cytochrome c oxidase subunit 2"/>
    <property type="match status" value="1"/>
</dbReference>
<dbReference type="FunFam" id="2.60.40.420:FF:000001">
    <property type="entry name" value="Cytochrome c oxidase subunit 2"/>
    <property type="match status" value="1"/>
</dbReference>
<dbReference type="Gene3D" id="1.10.287.90">
    <property type="match status" value="1"/>
</dbReference>
<dbReference type="Gene3D" id="2.60.40.420">
    <property type="entry name" value="Cupredoxins - blue copper proteins"/>
    <property type="match status" value="1"/>
</dbReference>
<dbReference type="InterPro" id="IPR045187">
    <property type="entry name" value="CcO_II"/>
</dbReference>
<dbReference type="InterPro" id="IPR002429">
    <property type="entry name" value="CcO_II-like_C"/>
</dbReference>
<dbReference type="InterPro" id="IPR034210">
    <property type="entry name" value="CcO_II_C"/>
</dbReference>
<dbReference type="InterPro" id="IPR001505">
    <property type="entry name" value="Copper_CuA"/>
</dbReference>
<dbReference type="InterPro" id="IPR008972">
    <property type="entry name" value="Cupredoxin"/>
</dbReference>
<dbReference type="InterPro" id="IPR014222">
    <property type="entry name" value="Cyt_c_oxidase_su2"/>
</dbReference>
<dbReference type="InterPro" id="IPR011759">
    <property type="entry name" value="Cyt_c_oxidase_su2_TM_dom"/>
</dbReference>
<dbReference type="InterPro" id="IPR036257">
    <property type="entry name" value="Cyt_c_oxidase_su2_TM_sf"/>
</dbReference>
<dbReference type="NCBIfam" id="TIGR02866">
    <property type="entry name" value="CoxB"/>
    <property type="match status" value="1"/>
</dbReference>
<dbReference type="PANTHER" id="PTHR22888:SF9">
    <property type="entry name" value="CYTOCHROME C OXIDASE SUBUNIT 2"/>
    <property type="match status" value="1"/>
</dbReference>
<dbReference type="PANTHER" id="PTHR22888">
    <property type="entry name" value="CYTOCHROME C OXIDASE, SUBUNIT II"/>
    <property type="match status" value="1"/>
</dbReference>
<dbReference type="Pfam" id="PF00116">
    <property type="entry name" value="COX2"/>
    <property type="match status" value="1"/>
</dbReference>
<dbReference type="Pfam" id="PF02790">
    <property type="entry name" value="COX2_TM"/>
    <property type="match status" value="1"/>
</dbReference>
<dbReference type="PRINTS" id="PR01166">
    <property type="entry name" value="CYCOXIDASEII"/>
</dbReference>
<dbReference type="SUPFAM" id="SSF49503">
    <property type="entry name" value="Cupredoxins"/>
    <property type="match status" value="1"/>
</dbReference>
<dbReference type="SUPFAM" id="SSF81464">
    <property type="entry name" value="Cytochrome c oxidase subunit II-like, transmembrane region"/>
    <property type="match status" value="1"/>
</dbReference>
<dbReference type="PROSITE" id="PS00078">
    <property type="entry name" value="COX2"/>
    <property type="match status" value="1"/>
</dbReference>
<dbReference type="PROSITE" id="PS50857">
    <property type="entry name" value="COX2_CUA"/>
    <property type="match status" value="1"/>
</dbReference>
<dbReference type="PROSITE" id="PS50999">
    <property type="entry name" value="COX2_TM"/>
    <property type="match status" value="1"/>
</dbReference>
<geneLocation type="mitochondrion"/>
<sequence length="227" mass="25565">MAHAAQVGLQDATSPIMEELITFHDHALMIIFLICFLVLYALFLTLTTKLTNTNISDAQEMETVWTILPAIILVLIALPSLRILYMTDEVNDPSLTIKSIGHQWYWTYEYTDYGGLIFNSYMLPPLFLEPGDLRLLDVDNRVVLPIEAPIRMMITSQDVLHSWAVPTLGLKTDAIPGRLNQTTFTATRPGVYYGQCSEICGANHSFMPIVLELIPLKIFEMGPVFTL</sequence>
<gene>
    <name type="primary">MT-CO2</name>
    <name type="synonym">COII</name>
    <name evidence="15" type="synonym">COX2</name>
    <name type="synonym">COXII</name>
    <name type="synonym">MTCO2</name>
</gene>
<organism>
    <name type="scientific">Homo sapiens</name>
    <name type="common">Human</name>
    <dbReference type="NCBI Taxonomy" id="9606"/>
    <lineage>
        <taxon>Eukaryota</taxon>
        <taxon>Metazoa</taxon>
        <taxon>Chordata</taxon>
        <taxon>Craniata</taxon>
        <taxon>Vertebrata</taxon>
        <taxon>Euteleostomi</taxon>
        <taxon>Mammalia</taxon>
        <taxon>Eutheria</taxon>
        <taxon>Euarchontoglires</taxon>
        <taxon>Primates</taxon>
        <taxon>Haplorrhini</taxon>
        <taxon>Catarrhini</taxon>
        <taxon>Hominidae</taxon>
        <taxon>Homo</taxon>
    </lineage>
</organism>
<feature type="chain" id="PRO_0000183610" description="Cytochrome c oxidase subunit 2">
    <location>
        <begin position="1"/>
        <end position="227"/>
    </location>
</feature>
<feature type="topological domain" description="Mitochondrial intermembrane" evidence="12">
    <location>
        <begin position="1"/>
        <end position="14"/>
    </location>
</feature>
<feature type="transmembrane region" description="Helical; Name=I" evidence="2">
    <location>
        <begin position="15"/>
        <end position="45"/>
    </location>
</feature>
<feature type="topological domain" description="Mitochondrial matrix" evidence="12">
    <location>
        <begin position="46"/>
        <end position="59"/>
    </location>
</feature>
<feature type="transmembrane region" description="Helical; Name=II" evidence="2">
    <location>
        <begin position="60"/>
        <end position="87"/>
    </location>
</feature>
<feature type="topological domain" description="Mitochondrial intermembrane" evidence="12">
    <location>
        <begin position="88"/>
        <end position="227"/>
    </location>
</feature>
<feature type="binding site" evidence="12">
    <location>
        <position position="161"/>
    </location>
    <ligand>
        <name>Cu cation</name>
        <dbReference type="ChEBI" id="CHEBI:23378"/>
        <label>A1</label>
    </ligand>
</feature>
<feature type="binding site" evidence="12">
    <location>
        <position position="196"/>
    </location>
    <ligand>
        <name>Cu cation</name>
        <dbReference type="ChEBI" id="CHEBI:23378"/>
        <label>A1</label>
    </ligand>
</feature>
<feature type="binding site" evidence="12">
    <location>
        <position position="196"/>
    </location>
    <ligand>
        <name>Cu cation</name>
        <dbReference type="ChEBI" id="CHEBI:23378"/>
        <label>A2</label>
    </ligand>
</feature>
<feature type="binding site" evidence="12">
    <location>
        <position position="198"/>
    </location>
    <ligand>
        <name>Cu cation</name>
        <dbReference type="ChEBI" id="CHEBI:23378"/>
        <label>A2</label>
    </ligand>
</feature>
<feature type="binding site" evidence="12">
    <location>
        <position position="198"/>
    </location>
    <ligand>
        <name>Mg(2+)</name>
        <dbReference type="ChEBI" id="CHEBI:18420"/>
        <note>ligand shared with MT-CO1</note>
    </ligand>
</feature>
<feature type="binding site" evidence="12">
    <location>
        <position position="200"/>
    </location>
    <ligand>
        <name>Cu cation</name>
        <dbReference type="ChEBI" id="CHEBI:23378"/>
        <label>A1</label>
    </ligand>
</feature>
<feature type="binding site" evidence="12">
    <location>
        <position position="200"/>
    </location>
    <ligand>
        <name>Cu cation</name>
        <dbReference type="ChEBI" id="CHEBI:23378"/>
        <label>A2</label>
    </ligand>
</feature>
<feature type="binding site" evidence="12">
    <location>
        <position position="204"/>
    </location>
    <ligand>
        <name>Cu cation</name>
        <dbReference type="ChEBI" id="CHEBI:23378"/>
        <label>A2</label>
    </ligand>
</feature>
<feature type="binding site" evidence="12">
    <location>
        <position position="207"/>
    </location>
    <ligand>
        <name>Cu cation</name>
        <dbReference type="ChEBI" id="CHEBI:23378"/>
        <label>A1</label>
    </ligand>
</feature>
<feature type="sequence variant" id="VAR_008863" evidence="4">
    <original>D</original>
    <variation>A</variation>
    <location>
        <position position="11"/>
    </location>
</feature>
<feature type="sequence variant" id="VAR_035085" description="In MT-C4D; affect the stability of the COX complex; dbSNP:rs199474827." evidence="3">
    <original>M</original>
    <variation>K</variation>
    <location>
        <position position="29"/>
    </location>
</feature>
<feature type="sequence variant" id="VAR_011344" description="In dbSNP:rs1569484167." evidence="13">
    <original>I</original>
    <variation>V</variation>
    <location>
        <position position="30"/>
    </location>
</feature>
<feature type="sequence variant" id="VAR_008571" evidence="4">
    <original>L</original>
    <variation>P</variation>
    <location>
        <position position="123"/>
    </location>
</feature>
<feature type="sequence variant" id="VAR_008390" description="In colorectal cancer; dbSNP:rs199474826." evidence="14">
    <original>V</original>
    <variation>M</variation>
    <location>
        <position position="142"/>
    </location>
</feature>
<feature type="sequence variant" id="VAR_011345" description="In dbSNP:rs1116904." evidence="13">
    <original>A</original>
    <variation>T</variation>
    <location>
        <position position="148"/>
    </location>
</feature>
<feature type="sequence variant" id="VAR_008572" evidence="4">
    <original>T</original>
    <variation>M</variation>
    <location>
        <position position="187"/>
    </location>
</feature>
<proteinExistence type="evidence at protein level"/>
<comment type="function">
    <text evidence="1">Component of the cytochrome c oxidase, the last enzyme in the mitochondrial electron transport chain which drives oxidative phosphorylation. The respiratory chain contains 3 multisubunit complexes succinate dehydrogenase (complex II, CII), ubiquinol-cytochrome c oxidoreductase (cytochrome b-c1 complex, complex III, CIII) and cytochrome c oxidase (complex IV, CIV), that cooperate to transfer electrons derived from NADH and succinate to molecular oxygen, creating an electrochemical gradient over the inner membrane that drives transmembrane transport and the ATP synthase. Cytochrome c oxidase is the component of the respiratory chain that catalyzes the reduction of oxygen to water. Electrons originating from reduced cytochrome c in the intermembrane space (IMS) are transferred via the dinuclear copper A center (CU(A)) of subunit 2 and heme A of subunit 1 to the active site in subunit 1, a binuclear center (BNC) formed by heme A3 and copper B (CU(B)). The BNC reduces molecular oxygen to 2 water molecules using 4 electrons from cytochrome c in the IMS and 4 protons from the mitochondrial matrix.</text>
</comment>
<comment type="catalytic activity">
    <reaction evidence="1">
        <text>4 Fe(II)-[cytochrome c] + O2 + 8 H(+)(in) = 4 Fe(III)-[cytochrome c] + 2 H2O + 4 H(+)(out)</text>
        <dbReference type="Rhea" id="RHEA:11436"/>
        <dbReference type="Rhea" id="RHEA-COMP:10350"/>
        <dbReference type="Rhea" id="RHEA-COMP:14399"/>
        <dbReference type="ChEBI" id="CHEBI:15377"/>
        <dbReference type="ChEBI" id="CHEBI:15378"/>
        <dbReference type="ChEBI" id="CHEBI:15379"/>
        <dbReference type="ChEBI" id="CHEBI:29033"/>
        <dbReference type="ChEBI" id="CHEBI:29034"/>
        <dbReference type="EC" id="7.1.1.9"/>
    </reaction>
    <physiologicalReaction direction="left-to-right" evidence="1">
        <dbReference type="Rhea" id="RHEA:11437"/>
    </physiologicalReaction>
</comment>
<comment type="cofactor">
    <cofactor evidence="12">
        <name>Cu cation</name>
        <dbReference type="ChEBI" id="CHEBI:23378"/>
    </cofactor>
    <text evidence="12">Binds a dinuclear copper A center per subunit.</text>
</comment>
<comment type="subunit">
    <text evidence="5 6 7 8 9 10 11 12">Component of the cytochrome c oxidase (complex IV, CIV), a multisubunit enzyme composed of 14 subunits. The complex is composed of a catalytic core of 3 subunits MT-CO1, MT-CO2 and MT-CO3, encoded in the mitochondrial DNA, and 11 supernumerary subunits COX4I1 (or COX4I2), COX5A, COX5B, COX6A1 (or COX6A2), COX6B1 (or COX6B2), COX6C, COX7A2 (or COX7A1), COX7B, COX7C, COX8A and NDUFA4, which are encoded in the nuclear genome (PubMed:30030519). The complex exists as a monomer or a dimer and forms supercomplexes (SCs) in the inner mitochondrial membrane with NADH-ubiquinone oxidoreductase (complex I, CI) and ubiquinol-cytochrome c oxidoreductase (cytochrome b-c1 complex, complex III, CIII), resulting in different assemblies (supercomplex SCI(1)III(2)IV(1) and megacomplex MCI(2)III(2)IV(2)) (PubMed:28844695). Found in a complex with TMEM177, COA6, COX18, COX20, SCO1 and SCO2 (PubMed:29154948). Interacts with TMEM177 in a COX20-dependent manner (PubMed:29154948). Interacts with COX20 (PubMed:23125284, PubMed:24403053, PubMed:28330871, PubMed:29154948). Interacts with COX16 (PubMed:29355485, PubMed:29381136).</text>
</comment>
<comment type="interaction">
    <interactant intactId="EBI-2105756">
        <id>P00403</id>
    </interactant>
    <interactant intactId="EBI-16423037">
        <id>Q9NZ94-2</id>
        <label>NLGN3</label>
    </interactant>
    <organismsDiffer>false</organismsDiffer>
    <experiments>4</experiments>
</comment>
<comment type="interaction">
    <interactant intactId="EBI-2105756">
        <id>P00403</id>
    </interactant>
    <interactant intactId="EBI-10828817">
        <id>P49281-3</id>
        <label>SLC11A2</label>
    </interactant>
    <organismsDiffer>false</organismsDiffer>
    <experiments>2</experiments>
</comment>
<comment type="subcellular location">
    <subcellularLocation>
        <location evidence="12">Mitochondrion inner membrane</location>
        <topology evidence="12">Multi-pass membrane protein</topology>
    </subcellularLocation>
</comment>
<comment type="disease" evidence="3">
    <disease id="DI-01469">
        <name>Mitochondrial complex IV deficiency</name>
        <acronym>MT-C4D</acronym>
        <description>A disorder of the mitochondrial respiratory chain with heterogeneous clinical manifestations, ranging from isolated myopathy to severe multisystem disease affecting several tissues and organs. Features include hypertrophic cardiomyopathy, hepatomegaly and liver dysfunction, hypotonia, muscle weakness, exercise intolerance, developmental delay, delayed motor development and intellectual disability. Some affected individuals manifest a fatal hypertrophic cardiomyopathy resulting in neonatal death. A subset of patients manifest Leigh syndrome.</description>
        <dbReference type="MIM" id="220110"/>
    </disease>
    <text>The disease is caused by variants affecting the gene represented in this entry.</text>
</comment>
<comment type="similarity">
    <text evidence="16">Belongs to the cytochrome c oxidase subunit 2 family.</text>
</comment>
<accession>P00403</accession>
<accession>Q37526</accession>
<name>COX2_HUMAN</name>